<keyword id="KW-0002">3D-structure</keyword>
<keyword id="KW-0903">Direct protein sequencing</keyword>
<keyword id="KW-1185">Reference proteome</keyword>
<keyword id="KW-0687">Ribonucleoprotein</keyword>
<keyword id="KW-0689">Ribosomal protein</keyword>
<keyword id="KW-0694">RNA-binding</keyword>
<keyword id="KW-0699">rRNA-binding</keyword>
<feature type="chain" id="PRO_0000176863" description="Small ribosomal subunit protein bS6">
    <location>
        <begin position="1"/>
        <end position="101"/>
    </location>
</feature>
<feature type="strand" evidence="6">
    <location>
        <begin position="3"/>
        <end position="10"/>
    </location>
</feature>
<feature type="helix" evidence="6">
    <location>
        <begin position="16"/>
        <end position="32"/>
    </location>
</feature>
<feature type="strand" evidence="6">
    <location>
        <begin position="36"/>
        <end position="47"/>
    </location>
</feature>
<feature type="strand" evidence="4">
    <location>
        <begin position="52"/>
        <end position="54"/>
    </location>
</feature>
<feature type="strand" evidence="5">
    <location>
        <begin position="60"/>
        <end position="66"/>
    </location>
</feature>
<feature type="helix" evidence="5">
    <location>
        <begin position="69"/>
        <end position="80"/>
    </location>
</feature>
<feature type="strand" evidence="3">
    <location>
        <begin position="82"/>
        <end position="84"/>
    </location>
</feature>
<feature type="strand" evidence="5">
    <location>
        <begin position="85"/>
        <end position="92"/>
    </location>
</feature>
<accession>Q5SLP8</accession>
<reference key="1">
    <citation type="submission" date="2004-11" db="EMBL/GenBank/DDBJ databases">
        <title>Complete genome sequence of Thermus thermophilus HB8.</title>
        <authorList>
            <person name="Masui R."/>
            <person name="Kurokawa K."/>
            <person name="Nakagawa N."/>
            <person name="Tokunaga F."/>
            <person name="Koyama Y."/>
            <person name="Shibata T."/>
            <person name="Oshima T."/>
            <person name="Yokoyama S."/>
            <person name="Yasunaga T."/>
            <person name="Kuramitsu S."/>
        </authorList>
    </citation>
    <scope>NUCLEOTIDE SEQUENCE [LARGE SCALE GENOMIC DNA]</scope>
    <source>
        <strain>ATCC 27634 / DSM 579 / HB8</strain>
    </source>
</reference>
<reference key="2">
    <citation type="journal article" date="1994" name="Eur. J. Biochem.">
        <title>Purification and characterization of the 30S ribosomal proteins from the bacterium Thermus thermophilus.</title>
        <authorList>
            <person name="Tsiboli P."/>
            <person name="Herfurth E."/>
            <person name="Choli T."/>
        </authorList>
    </citation>
    <scope>PROTEIN SEQUENCE OF 1-16</scope>
</reference>
<reference key="3">
    <citation type="journal article" date="2005" name="Proteomics">
        <title>Extending ribosomal protein identifications to unsequenced bacterial strains using matrix-assisted laser desorption/ionization mass spectrometry.</title>
        <authorList>
            <person name="Suh M.-J."/>
            <person name="Hamburg D.M."/>
            <person name="Gregory S.T."/>
            <person name="Dahlberg A.E."/>
            <person name="Limbach P.A."/>
        </authorList>
    </citation>
    <scope>MASS SPECTROMETRY</scope>
    <source>
        <strain>ATCC 27634 / DSM 579 / HB8</strain>
    </source>
</reference>
<reference key="4">
    <citation type="journal article" date="1999" name="Nature">
        <title>Structure of a bacterial 30S ribosomal subunit at 5.5 A resolution.</title>
        <authorList>
            <person name="Clemons W.M. Jr."/>
            <person name="May J.L.C."/>
            <person name="Wimberly B.T."/>
            <person name="McCutcheon J.P."/>
            <person name="Capel M.S."/>
            <person name="Ramakrishnan V."/>
        </authorList>
    </citation>
    <scope>X-RAY CRYSTALLOGRAPHY (5.5 ANGSTROMS) OF THE 30S SUBUNIT</scope>
</reference>
<reference key="5">
    <citation type="journal article" date="2000" name="Science">
        <title>Structure of the S15,S6,S18-rRNA complex: assembly of the 30S ribosome central domain.</title>
        <authorList>
            <person name="Agalarov S.C."/>
            <person name="Prasad G.S."/>
            <person name="Funke P.M."/>
            <person name="Stout C.D."/>
            <person name="Williamson J.R."/>
        </authorList>
    </citation>
    <scope>X-RAY CRYSTALLOGRAPHY (2.6 ANGSTROMS) OF A 30S SUBUNIT FRAGMENT</scope>
</reference>
<reference key="6">
    <citation type="journal article" date="2000" name="Nature">
        <title>Structure of the 30S ribosomal subunit.</title>
        <authorList>
            <person name="Wimberly B.T."/>
            <person name="Brodersen D.E."/>
            <person name="Clemons W.M. Jr."/>
            <person name="Morgan-Warren R.J."/>
            <person name="Carter A.P."/>
            <person name="Vonrhein C."/>
            <person name="Hartsch T."/>
            <person name="Ramakrishnan V."/>
        </authorList>
    </citation>
    <scope>X-RAY CRYSTALLOGRAPHY (3.05 ANGSTROMS) OF THE 30S SUBUNIT</scope>
</reference>
<reference key="7">
    <citation type="journal article" date="2000" name="Cell">
        <title>Structure of functionally activated small ribosomal subunit at 3.3 A resolution.</title>
        <authorList>
            <person name="Schluenzen F."/>
            <person name="Tocilj A."/>
            <person name="Zarivach R."/>
            <person name="Harms J."/>
            <person name="Gluehmann M."/>
            <person name="Janell D."/>
            <person name="Bashan A."/>
            <person name="Bartels H."/>
            <person name="Agmon I."/>
            <person name="Franceschi F."/>
            <person name="Yonath A."/>
        </authorList>
    </citation>
    <scope>X-RAY CRYSTALLOGRAPHY (3.3 ANGSTROMS) OF THE 30S SUBUNIT</scope>
</reference>
<reference key="8">
    <citation type="journal article" date="2000" name="Cell">
        <title>The structural basis for the action of the antibiotics tetracycline, pactamycin, and hygromycin B on the 30S ribosomal subunit.</title>
        <authorList>
            <person name="Brodersen D.E."/>
            <person name="Clemons W.M. Jr."/>
            <person name="Carter A.P."/>
            <person name="Morgan-Warren R.J."/>
            <person name="Wimberly B.T."/>
            <person name="Ramakrishnan V."/>
        </authorList>
    </citation>
    <scope>X-RAY CRYSTALLOGRAPHY (3.3 ANGSTROMS) OF THE 30S SUBUNIT</scope>
</reference>
<reference key="9">
    <citation type="journal article" date="2000" name="Nature">
        <title>Functional insights from the structure of the 30S ribosomal subunit and its interactions with antibiotics.</title>
        <authorList>
            <person name="Carter A.P."/>
            <person name="Clemons W.M. Jr."/>
            <person name="Brodersen D.E."/>
            <person name="Morgan-Warren R.J."/>
            <person name="Wimberly B.T."/>
            <person name="Ramakrishnan V."/>
        </authorList>
    </citation>
    <scope>X-RAY CRYSTALLOGRAPHY (3.0 ANGSTROMS) OF THE 30S SUBUNIT</scope>
</reference>
<reference key="10">
    <citation type="journal article" date="2001" name="Cell">
        <title>The path of messenger RNA through the ribosome.</title>
        <authorList>
            <person name="Yusupova G.Z."/>
            <person name="Yusupov M.M."/>
            <person name="Cate J.H.D."/>
            <person name="Noller H.F."/>
        </authorList>
    </citation>
    <scope>X-RAY CRYSTALLOGRAPHY (5.0 ANGSTROMS) OF THE RIBOSOME</scope>
</reference>
<reference key="11">
    <citation type="journal article" date="2001" name="EMBO J.">
        <title>Crystal structures of complexes of the small ribosomal subunit with tetracycline, edeine and IF3.</title>
        <authorList>
            <person name="Pioletti M."/>
            <person name="Schluenzen F."/>
            <person name="Harms J."/>
            <person name="Zarivach R."/>
            <person name="Gluehmann M."/>
            <person name="Avila H."/>
            <person name="Bashan A."/>
            <person name="Bartels H."/>
            <person name="Auerbach T."/>
            <person name="Jacobi C."/>
            <person name="Hartsch T."/>
            <person name="Yonath A."/>
            <person name="Franceschi F."/>
        </authorList>
    </citation>
    <scope>X-RAY CRYSTALLOGRAPHY (3.2 ANGSTROMS) OF THE 30S SUBUNIT</scope>
</reference>
<reference key="12">
    <citation type="journal article" date="2001" name="Science">
        <title>Crystal structure of an initiation factor bound to the 30S ribosomal subunit.</title>
        <authorList>
            <person name="Carter A.P."/>
            <person name="Clemons W.M. Jr."/>
            <person name="Brodersen D.E."/>
            <person name="Morgan-Warren R.J."/>
            <person name="Hartsch T."/>
            <person name="Wimberly B.T."/>
            <person name="Ramakrishnan V."/>
        </authorList>
    </citation>
    <scope>X-RAY CRYSTALLOGRAPHY (3.2 ANGSTROMS) OF THE 30S SUBUNIT</scope>
</reference>
<reference key="13">
    <citation type="journal article" date="2001" name="Science">
        <title>Crystal structure of the ribosome at 5.5 A resolution.</title>
        <authorList>
            <person name="Yusupov M.M."/>
            <person name="Yusupova G.Z."/>
            <person name="Baucom A."/>
            <person name="Lieberman K."/>
            <person name="Earnest T.N."/>
            <person name="Cate J.H.D."/>
            <person name="Noller H.F."/>
        </authorList>
    </citation>
    <scope>X-RAY CRYSTALLOGRAPHY (5.5 ANGSTROMS) OF THE RIBOSOME</scope>
</reference>
<reference key="14">
    <citation type="journal article" date="2001" name="Science">
        <title>Recognition of cognate transfer RNA by the 30S ribosomal subunit.</title>
        <authorList>
            <person name="Ogle J.M."/>
            <person name="Brodersen D.E."/>
            <person name="Clemons W.M. Jr."/>
            <person name="Tarry M.J."/>
            <person name="Carter A.P."/>
            <person name="Ramakrishnan V."/>
        </authorList>
    </citation>
    <scope>X-RAY CRYSTALLOGRAPHY (3.11 ANGSTROMS) OF THE 30S SUBUNIT</scope>
</reference>
<reference key="15">
    <citation type="journal article" date="2002" name="J. Mol. Biol.">
        <title>Crystal structure of the 30S ribosomal subunit from Thermus thermophilus: structure of the proteins and their interactions with 16S RNA.</title>
        <authorList>
            <person name="Brodersen D.E."/>
            <person name="Clemons W.M. Jr."/>
            <person name="Carter A.P."/>
            <person name="Wimberly B.T."/>
            <person name="Ramakrishnan V."/>
        </authorList>
    </citation>
    <scope>X-RAY CRYSTALLOGRAPHY (3.05 ANGSTROMS) OF THE 30S SUBUNIT</scope>
</reference>
<reference key="16">
    <citation type="journal article" date="2005" name="Cell">
        <title>Crystal structures of the ribosome in complex with release factors RF1 and RF2 bound to a cognate stop codon.</title>
        <authorList>
            <person name="Petry S."/>
            <person name="Brodersen D.E."/>
            <person name="Murphy F.V."/>
            <person name="Dunham C.M."/>
            <person name="Selmer M."/>
            <person name="Tarry M.J."/>
            <person name="Kelley A.C."/>
            <person name="Ramakrishnan V."/>
        </authorList>
    </citation>
    <scope>X-RAY CRYSTALLOGRAPHY (5.90 ANGSTROMS) OF 70S RIBOSOME IN COMPLEX WITH RF1 OR RF2</scope>
    <scope>SUBUNIT</scope>
</reference>
<reference key="17">
    <citation type="journal article" date="2008" name="Science">
        <title>Insights into translational termination from the structure of RF2 bound to the ribosome.</title>
        <authorList>
            <person name="Weixlbaumer A."/>
            <person name="Jin H."/>
            <person name="Neubauer C."/>
            <person name="Voorhees R.M."/>
            <person name="Petry S."/>
            <person name="Kelley A.C."/>
            <person name="Ramakrishnan V."/>
        </authorList>
    </citation>
    <scope>X-RAY CRYSTALLOGRAPHY (3.45 ANGSTROMS) OF 70S RIBOSOME IN COMPLEX WITH RF2</scope>
    <scope>SUBUNIT</scope>
</reference>
<reference key="18">
    <citation type="journal article" date="2010" name="Proc. Natl. Acad. Sci. U.S.A.">
        <title>Structure of the 70S ribosome bound to release factor 2 and a substrate analog provides insights into catalysis of peptide release.</title>
        <authorList>
            <person name="Jin H."/>
            <person name="Kelley A.C."/>
            <person name="Loakes D."/>
            <person name="Ramakrishnan V."/>
        </authorList>
    </citation>
    <scope>X-RAY CRYSTALLOGRAPHY (3.10 ANGSTROMS) OF 70S RIBOSOME IN COMPLEX WITH RF2</scope>
    <scope>SUBUNIT</scope>
</reference>
<proteinExistence type="evidence at protein level"/>
<protein>
    <recommendedName>
        <fullName evidence="2">Small ribosomal subunit protein bS6</fullName>
    </recommendedName>
    <alternativeName>
        <fullName>30S ribosomal protein S6</fullName>
    </alternativeName>
    <alternativeName>
        <fullName>TS9</fullName>
    </alternativeName>
</protein>
<evidence type="ECO:0000269" key="1">
    <source>
    </source>
</evidence>
<evidence type="ECO:0000305" key="2"/>
<evidence type="ECO:0007829" key="3">
    <source>
        <dbReference type="PDB" id="1FKA"/>
    </source>
</evidence>
<evidence type="ECO:0007829" key="4">
    <source>
        <dbReference type="PDB" id="1G1X"/>
    </source>
</evidence>
<evidence type="ECO:0007829" key="5">
    <source>
        <dbReference type="PDB" id="3ZZP"/>
    </source>
</evidence>
<evidence type="ECO:0007829" key="6">
    <source>
        <dbReference type="PDB" id="6I69"/>
    </source>
</evidence>
<comment type="function">
    <text>Located on the outer edge of the platform on the body of the 30S subunit.</text>
</comment>
<comment type="subunit">
    <text>Part of the 30S ribosomal subunit. Forms a tight heterodimer with protein bS18. May make transient contacts with protein uL2 of the 50S subunit during translation.</text>
</comment>
<comment type="mass spectrometry"/>
<comment type="similarity">
    <text evidence="2">Belongs to the bacterial ribosomal protein bS6 family.</text>
</comment>
<dbReference type="EMBL" id="AP008226">
    <property type="protein sequence ID" value="BAD70068.1"/>
    <property type="molecule type" value="Genomic_DNA"/>
</dbReference>
<dbReference type="RefSeq" id="WP_011174099.1">
    <property type="nucleotide sequence ID" value="NC_006461.1"/>
</dbReference>
<dbReference type="RefSeq" id="YP_143511.1">
    <property type="nucleotide sequence ID" value="NC_006461.1"/>
</dbReference>
<dbReference type="PDB" id="1FJG">
    <property type="method" value="X-ray"/>
    <property type="resolution" value="3.00 A"/>
    <property type="chains" value="F=1-101"/>
</dbReference>
<dbReference type="PDB" id="1FKA">
    <property type="method" value="X-ray"/>
    <property type="resolution" value="3.30 A"/>
    <property type="chains" value="F=1-101"/>
</dbReference>
<dbReference type="PDB" id="1G1X">
    <property type="method" value="X-ray"/>
    <property type="resolution" value="2.60 A"/>
    <property type="chains" value="A/F=1-98"/>
</dbReference>
<dbReference type="PDB" id="1HNW">
    <property type="method" value="X-ray"/>
    <property type="resolution" value="3.40 A"/>
    <property type="chains" value="F=1-101"/>
</dbReference>
<dbReference type="PDB" id="1HNX">
    <property type="method" value="X-ray"/>
    <property type="resolution" value="3.40 A"/>
    <property type="chains" value="F=1-101"/>
</dbReference>
<dbReference type="PDB" id="1HNZ">
    <property type="method" value="X-ray"/>
    <property type="resolution" value="3.30 A"/>
    <property type="chains" value="F=1-101"/>
</dbReference>
<dbReference type="PDB" id="1HR0">
    <property type="method" value="X-ray"/>
    <property type="resolution" value="3.20 A"/>
    <property type="chains" value="F=1-101"/>
</dbReference>
<dbReference type="PDB" id="1I94">
    <property type="method" value="X-ray"/>
    <property type="resolution" value="3.20 A"/>
    <property type="chains" value="F=1-101"/>
</dbReference>
<dbReference type="PDB" id="1I95">
    <property type="method" value="X-ray"/>
    <property type="resolution" value="4.50 A"/>
    <property type="chains" value="F=1-101"/>
</dbReference>
<dbReference type="PDB" id="1I96">
    <property type="method" value="X-ray"/>
    <property type="resolution" value="4.20 A"/>
    <property type="chains" value="F=1-101"/>
</dbReference>
<dbReference type="PDB" id="1I97">
    <property type="method" value="X-ray"/>
    <property type="resolution" value="4.50 A"/>
    <property type="chains" value="F=1-101"/>
</dbReference>
<dbReference type="PDB" id="1IBK">
    <property type="method" value="X-ray"/>
    <property type="resolution" value="3.31 A"/>
    <property type="chains" value="F=1-101"/>
</dbReference>
<dbReference type="PDB" id="1IBL">
    <property type="method" value="X-ray"/>
    <property type="resolution" value="3.11 A"/>
    <property type="chains" value="F=1-101"/>
</dbReference>
<dbReference type="PDB" id="1IBM">
    <property type="method" value="X-ray"/>
    <property type="resolution" value="3.31 A"/>
    <property type="chains" value="F=1-101"/>
</dbReference>
<dbReference type="PDB" id="1J5E">
    <property type="method" value="X-ray"/>
    <property type="resolution" value="3.05 A"/>
    <property type="chains" value="F=1-101"/>
</dbReference>
<dbReference type="PDB" id="1JGO">
    <property type="method" value="X-ray"/>
    <property type="resolution" value="5.60 A"/>
    <property type="chains" value="I=1-101"/>
</dbReference>
<dbReference type="PDB" id="1JGP">
    <property type="method" value="X-ray"/>
    <property type="resolution" value="7.00 A"/>
    <property type="chains" value="I=1-101"/>
</dbReference>
<dbReference type="PDB" id="1JGQ">
    <property type="method" value="X-ray"/>
    <property type="resolution" value="5.00 A"/>
    <property type="chains" value="I=1-101"/>
</dbReference>
<dbReference type="PDB" id="1ML5">
    <property type="method" value="EM"/>
    <property type="resolution" value="14.00 A"/>
    <property type="chains" value="I=1-101"/>
</dbReference>
<dbReference type="PDB" id="1N32">
    <property type="method" value="X-ray"/>
    <property type="resolution" value="3.00 A"/>
    <property type="chains" value="F=1-101"/>
</dbReference>
<dbReference type="PDB" id="1N33">
    <property type="method" value="X-ray"/>
    <property type="resolution" value="3.35 A"/>
    <property type="chains" value="F=1-101"/>
</dbReference>
<dbReference type="PDB" id="1N34">
    <property type="method" value="X-ray"/>
    <property type="resolution" value="3.80 A"/>
    <property type="chains" value="F=1-101"/>
</dbReference>
<dbReference type="PDB" id="1N36">
    <property type="method" value="X-ray"/>
    <property type="resolution" value="3.65 A"/>
    <property type="chains" value="F=1-101"/>
</dbReference>
<dbReference type="PDB" id="1QD7">
    <property type="method" value="X-ray"/>
    <property type="resolution" value="5.50 A"/>
    <property type="chains" value="E=1-97"/>
</dbReference>
<dbReference type="PDB" id="1VVJ">
    <property type="method" value="X-ray"/>
    <property type="resolution" value="3.44 A"/>
    <property type="chains" value="QF/XF=1-101"/>
</dbReference>
<dbReference type="PDB" id="1VY4">
    <property type="method" value="X-ray"/>
    <property type="resolution" value="2.60 A"/>
    <property type="chains" value="AF/CF=1-101"/>
</dbReference>
<dbReference type="PDB" id="1VY5">
    <property type="method" value="X-ray"/>
    <property type="resolution" value="2.55 A"/>
    <property type="chains" value="AF/CF=1-101"/>
</dbReference>
<dbReference type="PDB" id="1VY6">
    <property type="method" value="X-ray"/>
    <property type="resolution" value="2.90 A"/>
    <property type="chains" value="AF/CF=1-101"/>
</dbReference>
<dbReference type="PDB" id="1VY7">
    <property type="method" value="X-ray"/>
    <property type="resolution" value="2.80 A"/>
    <property type="chains" value="AF/CF=1-101"/>
</dbReference>
<dbReference type="PDB" id="1XMO">
    <property type="method" value="X-ray"/>
    <property type="resolution" value="3.25 A"/>
    <property type="chains" value="F=1-101"/>
</dbReference>
<dbReference type="PDB" id="1XMQ">
    <property type="method" value="X-ray"/>
    <property type="resolution" value="3.00 A"/>
    <property type="chains" value="F=1-101"/>
</dbReference>
<dbReference type="PDB" id="1XNQ">
    <property type="method" value="X-ray"/>
    <property type="resolution" value="3.05 A"/>
    <property type="chains" value="F=1-101"/>
</dbReference>
<dbReference type="PDB" id="1XNR">
    <property type="method" value="X-ray"/>
    <property type="resolution" value="3.10 A"/>
    <property type="chains" value="F=1-101"/>
</dbReference>
<dbReference type="PDB" id="2E5L">
    <property type="method" value="X-ray"/>
    <property type="resolution" value="3.30 A"/>
    <property type="chains" value="F=1-101"/>
</dbReference>
<dbReference type="PDB" id="2F4V">
    <property type="method" value="X-ray"/>
    <property type="resolution" value="3.80 A"/>
    <property type="chains" value="F=1-101"/>
</dbReference>
<dbReference type="PDB" id="2HHH">
    <property type="method" value="X-ray"/>
    <property type="resolution" value="3.35 A"/>
    <property type="chains" value="F=1-101"/>
</dbReference>
<dbReference type="PDB" id="2KJV">
    <property type="method" value="NMR"/>
    <property type="chains" value="A=1-101"/>
</dbReference>
<dbReference type="PDB" id="2KJW">
    <property type="method" value="NMR"/>
    <property type="chains" value="A=3-54"/>
</dbReference>
<dbReference type="PDB" id="2UU9">
    <property type="method" value="X-ray"/>
    <property type="resolution" value="3.10 A"/>
    <property type="chains" value="F=1-101"/>
</dbReference>
<dbReference type="PDB" id="2UUA">
    <property type="method" value="X-ray"/>
    <property type="resolution" value="2.90 A"/>
    <property type="chains" value="F=1-101"/>
</dbReference>
<dbReference type="PDB" id="2UUB">
    <property type="method" value="X-ray"/>
    <property type="resolution" value="2.90 A"/>
    <property type="chains" value="F=1-101"/>
</dbReference>
<dbReference type="PDB" id="2UUC">
    <property type="method" value="X-ray"/>
    <property type="resolution" value="3.10 A"/>
    <property type="chains" value="F=1-101"/>
</dbReference>
<dbReference type="PDB" id="2UXB">
    <property type="method" value="X-ray"/>
    <property type="resolution" value="3.10 A"/>
    <property type="chains" value="F=1-101"/>
</dbReference>
<dbReference type="PDB" id="2UXC">
    <property type="method" value="X-ray"/>
    <property type="resolution" value="2.90 A"/>
    <property type="chains" value="F=1-101"/>
</dbReference>
<dbReference type="PDB" id="2UXD">
    <property type="method" value="X-ray"/>
    <property type="resolution" value="3.20 A"/>
    <property type="chains" value="F=1-101"/>
</dbReference>
<dbReference type="PDB" id="2VQE">
    <property type="method" value="X-ray"/>
    <property type="resolution" value="2.50 A"/>
    <property type="chains" value="F=1-101"/>
</dbReference>
<dbReference type="PDB" id="2VQF">
    <property type="method" value="X-ray"/>
    <property type="resolution" value="2.90 A"/>
    <property type="chains" value="F=1-101"/>
</dbReference>
<dbReference type="PDB" id="2ZM6">
    <property type="method" value="X-ray"/>
    <property type="resolution" value="3.30 A"/>
    <property type="chains" value="F=1-101"/>
</dbReference>
<dbReference type="PDB" id="3OTO">
    <property type="method" value="X-ray"/>
    <property type="resolution" value="3.69 A"/>
    <property type="chains" value="F=1-101"/>
</dbReference>
<dbReference type="PDB" id="3T1H">
    <property type="method" value="X-ray"/>
    <property type="resolution" value="3.11 A"/>
    <property type="chains" value="F=1-101"/>
</dbReference>
<dbReference type="PDB" id="3T1Y">
    <property type="method" value="X-ray"/>
    <property type="resolution" value="2.80 A"/>
    <property type="chains" value="F=1-101"/>
</dbReference>
<dbReference type="PDB" id="3ZZP">
    <property type="method" value="X-ray"/>
    <property type="resolution" value="0.96 A"/>
    <property type="chains" value="A=55-100"/>
</dbReference>
<dbReference type="PDB" id="4AQY">
    <property type="method" value="X-ray"/>
    <property type="resolution" value="3.50 A"/>
    <property type="chains" value="F=1-101"/>
</dbReference>
<dbReference type="PDB" id="4B3M">
    <property type="method" value="X-ray"/>
    <property type="resolution" value="2.90 A"/>
    <property type="chains" value="F=1-101"/>
</dbReference>
<dbReference type="PDB" id="4B3R">
    <property type="method" value="X-ray"/>
    <property type="resolution" value="3.00 A"/>
    <property type="chains" value="F=1-101"/>
</dbReference>
<dbReference type="PDB" id="4B3S">
    <property type="method" value="X-ray"/>
    <property type="resolution" value="3.15 A"/>
    <property type="chains" value="F=1-101"/>
</dbReference>
<dbReference type="PDB" id="4B3T">
    <property type="method" value="X-ray"/>
    <property type="resolution" value="3.00 A"/>
    <property type="chains" value="F=1-101"/>
</dbReference>
<dbReference type="PDB" id="4DR1">
    <property type="method" value="X-ray"/>
    <property type="resolution" value="3.60 A"/>
    <property type="chains" value="F=1-101"/>
</dbReference>
<dbReference type="PDB" id="4DR2">
    <property type="method" value="X-ray"/>
    <property type="resolution" value="3.25 A"/>
    <property type="chains" value="F=1-101"/>
</dbReference>
<dbReference type="PDB" id="4DR3">
    <property type="method" value="X-ray"/>
    <property type="resolution" value="3.35 A"/>
    <property type="chains" value="F=1-101"/>
</dbReference>
<dbReference type="PDB" id="4DR4">
    <property type="method" value="X-ray"/>
    <property type="resolution" value="3.97 A"/>
    <property type="chains" value="F=1-101"/>
</dbReference>
<dbReference type="PDB" id="4DR5">
    <property type="method" value="X-ray"/>
    <property type="resolution" value="3.45 A"/>
    <property type="chains" value="F=1-101"/>
</dbReference>
<dbReference type="PDB" id="4DR6">
    <property type="method" value="X-ray"/>
    <property type="resolution" value="3.30 A"/>
    <property type="chains" value="F=1-101"/>
</dbReference>
<dbReference type="PDB" id="4DR7">
    <property type="method" value="X-ray"/>
    <property type="resolution" value="3.75 A"/>
    <property type="chains" value="F=1-101"/>
</dbReference>
<dbReference type="PDB" id="4DUY">
    <property type="method" value="X-ray"/>
    <property type="resolution" value="3.39 A"/>
    <property type="chains" value="F=1-101"/>
</dbReference>
<dbReference type="PDB" id="4DUZ">
    <property type="method" value="X-ray"/>
    <property type="resolution" value="3.65 A"/>
    <property type="chains" value="F=1-101"/>
</dbReference>
<dbReference type="PDB" id="4DV0">
    <property type="method" value="X-ray"/>
    <property type="resolution" value="3.85 A"/>
    <property type="chains" value="F=1-101"/>
</dbReference>
<dbReference type="PDB" id="4DV1">
    <property type="method" value="X-ray"/>
    <property type="resolution" value="3.85 A"/>
    <property type="chains" value="F=1-101"/>
</dbReference>
<dbReference type="PDB" id="4DV2">
    <property type="method" value="X-ray"/>
    <property type="resolution" value="3.65 A"/>
    <property type="chains" value="F=1-101"/>
</dbReference>
<dbReference type="PDB" id="4DV3">
    <property type="method" value="X-ray"/>
    <property type="resolution" value="3.55 A"/>
    <property type="chains" value="F=1-101"/>
</dbReference>
<dbReference type="PDB" id="4DV4">
    <property type="method" value="X-ray"/>
    <property type="resolution" value="3.65 A"/>
    <property type="chains" value="F=1-101"/>
</dbReference>
<dbReference type="PDB" id="4DV5">
    <property type="method" value="X-ray"/>
    <property type="resolution" value="3.68 A"/>
    <property type="chains" value="F=1-101"/>
</dbReference>
<dbReference type="PDB" id="4DV6">
    <property type="method" value="X-ray"/>
    <property type="resolution" value="3.30 A"/>
    <property type="chains" value="F=1-101"/>
</dbReference>
<dbReference type="PDB" id="4DV7">
    <property type="method" value="X-ray"/>
    <property type="resolution" value="3.29 A"/>
    <property type="chains" value="F=1-101"/>
</dbReference>
<dbReference type="PDB" id="4GKJ">
    <property type="method" value="X-ray"/>
    <property type="resolution" value="3.30 A"/>
    <property type="chains" value="F=1-101"/>
</dbReference>
<dbReference type="PDB" id="4GKK">
    <property type="method" value="X-ray"/>
    <property type="resolution" value="3.20 A"/>
    <property type="chains" value="F=1-101"/>
</dbReference>
<dbReference type="PDB" id="4JI0">
    <property type="method" value="X-ray"/>
    <property type="resolution" value="3.49 A"/>
    <property type="chains" value="F=1-101"/>
</dbReference>
<dbReference type="PDB" id="4JI1">
    <property type="method" value="X-ray"/>
    <property type="resolution" value="3.14 A"/>
    <property type="chains" value="F=1-101"/>
</dbReference>
<dbReference type="PDB" id="4JI2">
    <property type="method" value="X-ray"/>
    <property type="resolution" value="3.64 A"/>
    <property type="chains" value="F=1-101"/>
</dbReference>
<dbReference type="PDB" id="4JI3">
    <property type="method" value="X-ray"/>
    <property type="resolution" value="3.35 A"/>
    <property type="chains" value="F=1-101"/>
</dbReference>
<dbReference type="PDB" id="4JI4">
    <property type="method" value="X-ray"/>
    <property type="resolution" value="3.69 A"/>
    <property type="chains" value="F=1-101"/>
</dbReference>
<dbReference type="PDB" id="4JI5">
    <property type="method" value="X-ray"/>
    <property type="resolution" value="3.85 A"/>
    <property type="chains" value="F=1-101"/>
</dbReference>
<dbReference type="PDB" id="4JI6">
    <property type="method" value="X-ray"/>
    <property type="resolution" value="3.55 A"/>
    <property type="chains" value="F=1-101"/>
</dbReference>
<dbReference type="PDB" id="4JI7">
    <property type="method" value="X-ray"/>
    <property type="resolution" value="3.50 A"/>
    <property type="chains" value="F=1-101"/>
</dbReference>
<dbReference type="PDB" id="4JI8">
    <property type="method" value="X-ray"/>
    <property type="resolution" value="3.74 A"/>
    <property type="chains" value="F=1-101"/>
</dbReference>
<dbReference type="PDB" id="4JV5">
    <property type="method" value="X-ray"/>
    <property type="resolution" value="3.16 A"/>
    <property type="chains" value="F=1-101"/>
</dbReference>
<dbReference type="PDB" id="4JYA">
    <property type="method" value="X-ray"/>
    <property type="resolution" value="3.10 A"/>
    <property type="chains" value="F=1-101"/>
</dbReference>
<dbReference type="PDB" id="4K0K">
    <property type="method" value="X-ray"/>
    <property type="resolution" value="3.40 A"/>
    <property type="chains" value="F=1-101"/>
</dbReference>
<dbReference type="PDB" id="4KHP">
    <property type="method" value="X-ray"/>
    <property type="resolution" value="3.10 A"/>
    <property type="chains" value="F=1-101"/>
</dbReference>
<dbReference type="PDB" id="4L47">
    <property type="method" value="X-ray"/>
    <property type="resolution" value="3.22 A"/>
    <property type="chains" value="QF/XF=1-101"/>
</dbReference>
<dbReference type="PDB" id="4L71">
    <property type="method" value="X-ray"/>
    <property type="resolution" value="3.90 A"/>
    <property type="chains" value="QF/XF=1-101"/>
</dbReference>
<dbReference type="PDB" id="4LEL">
    <property type="method" value="X-ray"/>
    <property type="resolution" value="3.90 A"/>
    <property type="chains" value="QF/XF=1-101"/>
</dbReference>
<dbReference type="PDB" id="4LF4">
    <property type="method" value="X-ray"/>
    <property type="resolution" value="3.34 A"/>
    <property type="chains" value="F=1-101"/>
</dbReference>
<dbReference type="PDB" id="4LF5">
    <property type="method" value="X-ray"/>
    <property type="resolution" value="3.75 A"/>
    <property type="chains" value="F=1-101"/>
</dbReference>
<dbReference type="PDB" id="4LF6">
    <property type="method" value="X-ray"/>
    <property type="resolution" value="3.31 A"/>
    <property type="chains" value="F=1-101"/>
</dbReference>
<dbReference type="PDB" id="4LF7">
    <property type="method" value="X-ray"/>
    <property type="resolution" value="3.15 A"/>
    <property type="chains" value="F=1-101"/>
</dbReference>
<dbReference type="PDB" id="4LF8">
    <property type="method" value="X-ray"/>
    <property type="resolution" value="3.15 A"/>
    <property type="chains" value="F=1-101"/>
</dbReference>
<dbReference type="PDB" id="4LF9">
    <property type="method" value="X-ray"/>
    <property type="resolution" value="3.28 A"/>
    <property type="chains" value="F=1-101"/>
</dbReference>
<dbReference type="PDB" id="4LFA">
    <property type="method" value="X-ray"/>
    <property type="resolution" value="3.65 A"/>
    <property type="chains" value="F=1-101"/>
</dbReference>
<dbReference type="PDB" id="4LFB">
    <property type="method" value="X-ray"/>
    <property type="resolution" value="3.01 A"/>
    <property type="chains" value="F=1-101"/>
</dbReference>
<dbReference type="PDB" id="4LFC">
    <property type="method" value="X-ray"/>
    <property type="resolution" value="3.60 A"/>
    <property type="chains" value="F=1-101"/>
</dbReference>
<dbReference type="PDB" id="4LFZ">
    <property type="method" value="X-ray"/>
    <property type="resolution" value="3.92 A"/>
    <property type="chains" value="QF/XF=1-101"/>
</dbReference>
<dbReference type="PDB" id="4LNT">
    <property type="method" value="X-ray"/>
    <property type="resolution" value="2.94 A"/>
    <property type="chains" value="QF/XF=1-101"/>
</dbReference>
<dbReference type="PDB" id="4LSK">
    <property type="method" value="X-ray"/>
    <property type="resolution" value="3.48 A"/>
    <property type="chains" value="QF/XF=1-101"/>
</dbReference>
<dbReference type="PDB" id="4LT8">
    <property type="method" value="X-ray"/>
    <property type="resolution" value="3.14 A"/>
    <property type="chains" value="QF/XF=1-101"/>
</dbReference>
<dbReference type="PDB" id="4NXM">
    <property type="method" value="X-ray"/>
    <property type="resolution" value="3.65 A"/>
    <property type="chains" value="F=1-101"/>
</dbReference>
<dbReference type="PDB" id="4NXN">
    <property type="method" value="X-ray"/>
    <property type="resolution" value="3.54 A"/>
    <property type="chains" value="F=1-101"/>
</dbReference>
<dbReference type="PDB" id="4OX9">
    <property type="method" value="X-ray"/>
    <property type="resolution" value="3.80 A"/>
    <property type="chains" value="F=1-101"/>
</dbReference>
<dbReference type="PDB" id="4P6F">
    <property type="method" value="X-ray"/>
    <property type="resolution" value="3.60 A"/>
    <property type="chains" value="QF/XF=1-101"/>
</dbReference>
<dbReference type="PDB" id="4P70">
    <property type="method" value="X-ray"/>
    <property type="resolution" value="3.68 A"/>
    <property type="chains" value="QF/XF=1-101"/>
</dbReference>
<dbReference type="PDB" id="4TUA">
    <property type="method" value="X-ray"/>
    <property type="resolution" value="3.60 A"/>
    <property type="chains" value="QF/XF=1-101"/>
</dbReference>
<dbReference type="PDB" id="4TUB">
    <property type="method" value="X-ray"/>
    <property type="resolution" value="3.60 A"/>
    <property type="chains" value="QF/XF=1-101"/>
</dbReference>
<dbReference type="PDB" id="4TUC">
    <property type="method" value="X-ray"/>
    <property type="resolution" value="3.60 A"/>
    <property type="chains" value="QF/XF=1-101"/>
</dbReference>
<dbReference type="PDB" id="4TUD">
    <property type="method" value="X-ray"/>
    <property type="resolution" value="3.60 A"/>
    <property type="chains" value="QF/XF=1-101"/>
</dbReference>
<dbReference type="PDB" id="4TUE">
    <property type="method" value="X-ray"/>
    <property type="resolution" value="3.50 A"/>
    <property type="chains" value="QF/XF=1-101"/>
</dbReference>
<dbReference type="PDB" id="4V42">
    <property type="method" value="X-ray"/>
    <property type="resolution" value="5.50 A"/>
    <property type="chains" value="AI=1-101"/>
</dbReference>
<dbReference type="PDB" id="4V49">
    <property type="method" value="X-ray"/>
    <property type="resolution" value="8.70 A"/>
    <property type="chains" value="F=1-101"/>
</dbReference>
<dbReference type="PDB" id="4V4A">
    <property type="method" value="X-ray"/>
    <property type="resolution" value="9.50 A"/>
    <property type="chains" value="F=1-101"/>
</dbReference>
<dbReference type="PDB" id="4V4I">
    <property type="method" value="X-ray"/>
    <property type="resolution" value="3.71 A"/>
    <property type="chains" value="g=-"/>
</dbReference>
<dbReference type="PDB" id="4V4P">
    <property type="method" value="X-ray"/>
    <property type="resolution" value="5.50 A"/>
    <property type="chains" value="BI=1-101"/>
</dbReference>
<dbReference type="PDB" id="4V4R">
    <property type="method" value="X-ray"/>
    <property type="resolution" value="5.90 A"/>
    <property type="chains" value="AF=1-101"/>
</dbReference>
<dbReference type="PDB" id="4V4S">
    <property type="method" value="X-ray"/>
    <property type="resolution" value="6.76 A"/>
    <property type="chains" value="AF=1-101"/>
</dbReference>
<dbReference type="PDB" id="4V4T">
    <property type="method" value="X-ray"/>
    <property type="resolution" value="6.46 A"/>
    <property type="chains" value="AF=1-101"/>
</dbReference>
<dbReference type="PDB" id="4V4X">
    <property type="method" value="X-ray"/>
    <property type="resolution" value="5.00 A"/>
    <property type="chains" value="AI=1-101"/>
</dbReference>
<dbReference type="PDB" id="4V4Y">
    <property type="method" value="X-ray"/>
    <property type="resolution" value="5.50 A"/>
    <property type="chains" value="AI=1-101"/>
</dbReference>
<dbReference type="PDB" id="4V4Z">
    <property type="method" value="X-ray"/>
    <property type="resolution" value="4.51 A"/>
    <property type="chains" value="AI=1-101"/>
</dbReference>
<dbReference type="PDB" id="4V51">
    <property type="method" value="X-ray"/>
    <property type="resolution" value="2.80 A"/>
    <property type="chains" value="AF/CF=1-101"/>
</dbReference>
<dbReference type="PDB" id="4V5A">
    <property type="method" value="X-ray"/>
    <property type="resolution" value="3.50 A"/>
    <property type="chains" value="AF/CF=1-101"/>
</dbReference>
<dbReference type="PDB" id="4V5C">
    <property type="method" value="X-ray"/>
    <property type="resolution" value="3.30 A"/>
    <property type="chains" value="AF/CF=1-101"/>
</dbReference>
<dbReference type="PDB" id="4V5D">
    <property type="method" value="X-ray"/>
    <property type="resolution" value="3.50 A"/>
    <property type="chains" value="AF/CF=1-101"/>
</dbReference>
<dbReference type="PDB" id="4V5E">
    <property type="method" value="X-ray"/>
    <property type="resolution" value="3.45 A"/>
    <property type="chains" value="AF/CF=1-101"/>
</dbReference>
<dbReference type="PDB" id="4V5F">
    <property type="method" value="X-ray"/>
    <property type="resolution" value="3.60 A"/>
    <property type="chains" value="AF/CF=1-101"/>
</dbReference>
<dbReference type="PDB" id="4V5G">
    <property type="method" value="X-ray"/>
    <property type="resolution" value="3.60 A"/>
    <property type="chains" value="AF/CF=1-101"/>
</dbReference>
<dbReference type="PDB" id="4V5J">
    <property type="method" value="X-ray"/>
    <property type="resolution" value="3.10 A"/>
    <property type="chains" value="AF/CF=1-101"/>
</dbReference>
<dbReference type="PDB" id="4V5K">
    <property type="method" value="X-ray"/>
    <property type="resolution" value="3.20 A"/>
    <property type="chains" value="AF/CF=1-101"/>
</dbReference>
<dbReference type="PDB" id="4V5L">
    <property type="method" value="X-ray"/>
    <property type="resolution" value="3.10 A"/>
    <property type="chains" value="AF=1-101"/>
</dbReference>
<dbReference type="PDB" id="4V5M">
    <property type="method" value="EM"/>
    <property type="resolution" value="7.80 A"/>
    <property type="chains" value="AF=1-101"/>
</dbReference>
<dbReference type="PDB" id="4V5N">
    <property type="method" value="EM"/>
    <property type="resolution" value="7.60 A"/>
    <property type="chains" value="AF=1-101"/>
</dbReference>
<dbReference type="PDB" id="4V5P">
    <property type="method" value="X-ray"/>
    <property type="resolution" value="3.10 A"/>
    <property type="chains" value="AF/CF=1-101"/>
</dbReference>
<dbReference type="PDB" id="4V5Q">
    <property type="method" value="X-ray"/>
    <property type="resolution" value="3.10 A"/>
    <property type="chains" value="AF/CF=1-101"/>
</dbReference>
<dbReference type="PDB" id="4V5R">
    <property type="method" value="X-ray"/>
    <property type="resolution" value="3.10 A"/>
    <property type="chains" value="AF/CF=1-101"/>
</dbReference>
<dbReference type="PDB" id="4V5S">
    <property type="method" value="X-ray"/>
    <property type="resolution" value="3.10 A"/>
    <property type="chains" value="AF/CF=1-101"/>
</dbReference>
<dbReference type="PDB" id="4V68">
    <property type="method" value="EM"/>
    <property type="resolution" value="6.40 A"/>
    <property type="chains" value="AF=1-101"/>
</dbReference>
<dbReference type="PDB" id="4V6A">
    <property type="method" value="X-ray"/>
    <property type="resolution" value="3.10 A"/>
    <property type="chains" value="AF/CF=1-101"/>
</dbReference>
<dbReference type="PDB" id="4V6F">
    <property type="method" value="X-ray"/>
    <property type="resolution" value="3.10 A"/>
    <property type="chains" value="BI/CI=1-101"/>
</dbReference>
<dbReference type="PDB" id="4V6G">
    <property type="method" value="X-ray"/>
    <property type="resolution" value="3.50 A"/>
    <property type="chains" value="AI/CI=1-101"/>
</dbReference>
<dbReference type="PDB" id="4V7J">
    <property type="method" value="X-ray"/>
    <property type="resolution" value="3.30 A"/>
    <property type="chains" value="Af/Bf=1-101"/>
</dbReference>
<dbReference type="PDB" id="4V7K">
    <property type="method" value="X-ray"/>
    <property type="resolution" value="3.60 A"/>
    <property type="chains" value="Af/Bf=1-101"/>
</dbReference>
<dbReference type="PDB" id="4V7L">
    <property type="method" value="X-ray"/>
    <property type="resolution" value="3.00 A"/>
    <property type="chains" value="AF/CF=1-101"/>
</dbReference>
<dbReference type="PDB" id="4V7M">
    <property type="method" value="X-ray"/>
    <property type="resolution" value="3.45 A"/>
    <property type="chains" value="AF/CF=1-101"/>
</dbReference>
<dbReference type="PDB" id="4V7W">
    <property type="method" value="X-ray"/>
    <property type="resolution" value="3.00 A"/>
    <property type="chains" value="AF/CF=1-101"/>
</dbReference>
<dbReference type="PDB" id="4V7X">
    <property type="method" value="X-ray"/>
    <property type="resolution" value="3.00 A"/>
    <property type="chains" value="AF/CF=1-101"/>
</dbReference>
<dbReference type="PDB" id="4V7Y">
    <property type="method" value="X-ray"/>
    <property type="resolution" value="3.00 A"/>
    <property type="chains" value="AF/CF=1-101"/>
</dbReference>
<dbReference type="PDB" id="4V7Z">
    <property type="method" value="X-ray"/>
    <property type="resolution" value="3.10 A"/>
    <property type="chains" value="AF/CF=1-101"/>
</dbReference>
<dbReference type="PDB" id="4V87">
    <property type="method" value="X-ray"/>
    <property type="resolution" value="3.10 A"/>
    <property type="chains" value="BI/CI=1-101"/>
</dbReference>
<dbReference type="PDB" id="4V8A">
    <property type="method" value="X-ray"/>
    <property type="resolution" value="3.20 A"/>
    <property type="chains" value="CF/DF=1-101"/>
</dbReference>
<dbReference type="PDB" id="4V8B">
    <property type="method" value="X-ray"/>
    <property type="resolution" value="3.00 A"/>
    <property type="chains" value="AI/CI=1-101"/>
</dbReference>
<dbReference type="PDB" id="4V8C">
    <property type="method" value="X-ray"/>
    <property type="resolution" value="3.30 A"/>
    <property type="chains" value="CI/DI=1-101"/>
</dbReference>
<dbReference type="PDB" id="4V8D">
    <property type="method" value="X-ray"/>
    <property type="resolution" value="3.00 A"/>
    <property type="chains" value="AI/CI=1-101"/>
</dbReference>
<dbReference type="PDB" id="4V8E">
    <property type="method" value="X-ray"/>
    <property type="resolution" value="3.30 A"/>
    <property type="chains" value="BI/DI=1-101"/>
</dbReference>
<dbReference type="PDB" id="4V8F">
    <property type="method" value="X-ray"/>
    <property type="resolution" value="3.30 A"/>
    <property type="chains" value="BI/CI=1-101"/>
</dbReference>
<dbReference type="PDB" id="4V8G">
    <property type="method" value="X-ray"/>
    <property type="resolution" value="3.00 A"/>
    <property type="chains" value="AF/CF=1-101"/>
</dbReference>
<dbReference type="PDB" id="4V8H">
    <property type="method" value="X-ray"/>
    <property type="resolution" value="3.10 A"/>
    <property type="chains" value="AF/CF=1-101"/>
</dbReference>
<dbReference type="PDB" id="4V8I">
    <property type="method" value="X-ray"/>
    <property type="resolution" value="2.70 A"/>
    <property type="chains" value="AF/CF=1-101"/>
</dbReference>
<dbReference type="PDB" id="4V8J">
    <property type="method" value="X-ray"/>
    <property type="resolution" value="3.90 A"/>
    <property type="chains" value="AF/CF=1-101"/>
</dbReference>
<dbReference type="PDB" id="4V8N">
    <property type="method" value="X-ray"/>
    <property type="resolution" value="3.10 A"/>
    <property type="chains" value="AF/CF=1-101"/>
</dbReference>
<dbReference type="PDB" id="4V8O">
    <property type="method" value="X-ray"/>
    <property type="resolution" value="3.80 A"/>
    <property type="chains" value="AF=1-101"/>
</dbReference>
<dbReference type="PDB" id="4V8Q">
    <property type="method" value="X-ray"/>
    <property type="resolution" value="3.10 A"/>
    <property type="chains" value="BF=1-101"/>
</dbReference>
<dbReference type="PDB" id="4V8U">
    <property type="method" value="X-ray"/>
    <property type="resolution" value="3.70 A"/>
    <property type="chains" value="AF/CF=1-101"/>
</dbReference>
<dbReference type="PDB" id="4V8X">
    <property type="method" value="X-ray"/>
    <property type="resolution" value="3.35 A"/>
    <property type="chains" value="AF/CF=1-101"/>
</dbReference>
<dbReference type="PDB" id="4V90">
    <property type="method" value="X-ray"/>
    <property type="resolution" value="2.95 A"/>
    <property type="chains" value="AF=1-101"/>
</dbReference>
<dbReference type="PDB" id="4V95">
    <property type="method" value="X-ray"/>
    <property type="resolution" value="3.20 A"/>
    <property type="chains" value="AF/CF=1-101"/>
</dbReference>
<dbReference type="PDB" id="4V97">
    <property type="method" value="X-ray"/>
    <property type="resolution" value="3.52 A"/>
    <property type="chains" value="AF/CF=1-101"/>
</dbReference>
<dbReference type="PDB" id="4V9A">
    <property type="method" value="X-ray"/>
    <property type="resolution" value="3.30 A"/>
    <property type="chains" value="AI/CI=1-101"/>
</dbReference>
<dbReference type="PDB" id="4V9B">
    <property type="method" value="X-ray"/>
    <property type="resolution" value="3.10 A"/>
    <property type="chains" value="AI/CI=1-101"/>
</dbReference>
<dbReference type="PDB" id="4V9H">
    <property type="method" value="X-ray"/>
    <property type="resolution" value="2.86 A"/>
    <property type="chains" value="AF=1-101"/>
</dbReference>
<dbReference type="PDB" id="4V9I">
    <property type="method" value="X-ray"/>
    <property type="resolution" value="3.30 A"/>
    <property type="chains" value="AF/CF=1-101"/>
</dbReference>
<dbReference type="PDB" id="4V9R">
    <property type="method" value="X-ray"/>
    <property type="resolution" value="3.00 A"/>
    <property type="chains" value="AF/CF=1-101"/>
</dbReference>
<dbReference type="PDB" id="4V9S">
    <property type="method" value="X-ray"/>
    <property type="resolution" value="3.10 A"/>
    <property type="chains" value="AF/CF=1-101"/>
</dbReference>
<dbReference type="PDB" id="4W2E">
    <property type="method" value="X-ray"/>
    <property type="resolution" value="2.90 A"/>
    <property type="chains" value="f=1-101"/>
</dbReference>
<dbReference type="PDB" id="4W2F">
    <property type="method" value="X-ray"/>
    <property type="resolution" value="2.40 A"/>
    <property type="chains" value="AF/CF=1-101"/>
</dbReference>
<dbReference type="PDB" id="4W2G">
    <property type="method" value="X-ray"/>
    <property type="resolution" value="2.55 A"/>
    <property type="chains" value="AF/CF=1-101"/>
</dbReference>
<dbReference type="PDB" id="4W2H">
    <property type="method" value="X-ray"/>
    <property type="resolution" value="2.70 A"/>
    <property type="chains" value="AF/CF=1-101"/>
</dbReference>
<dbReference type="PDB" id="4W2I">
    <property type="method" value="X-ray"/>
    <property type="resolution" value="2.70 A"/>
    <property type="chains" value="AF/CF=1-101"/>
</dbReference>
<dbReference type="PDB" id="4W4G">
    <property type="method" value="X-ray"/>
    <property type="resolution" value="3.30 A"/>
    <property type="chains" value="QF/XF=1-101"/>
</dbReference>
<dbReference type="PDB" id="4WPO">
    <property type="method" value="X-ray"/>
    <property type="resolution" value="2.80 A"/>
    <property type="chains" value="BF/DF=1-101"/>
</dbReference>
<dbReference type="PDB" id="4WQ1">
    <property type="method" value="X-ray"/>
    <property type="resolution" value="3.10 A"/>
    <property type="chains" value="52/5E=1-101"/>
</dbReference>
<dbReference type="PDB" id="4WQF">
    <property type="method" value="X-ray"/>
    <property type="resolution" value="2.80 A"/>
    <property type="chains" value="BF/DF=1-101"/>
</dbReference>
<dbReference type="PDB" id="4WQR">
    <property type="method" value="X-ray"/>
    <property type="resolution" value="3.15 A"/>
    <property type="chains" value="52/5E=1-101"/>
</dbReference>
<dbReference type="PDB" id="4WQU">
    <property type="method" value="X-ray"/>
    <property type="resolution" value="2.80 A"/>
    <property type="chains" value="BF/DF=1-101"/>
</dbReference>
<dbReference type="PDB" id="4WQY">
    <property type="method" value="X-ray"/>
    <property type="resolution" value="2.80 A"/>
    <property type="chains" value="BF/DF=1-101"/>
</dbReference>
<dbReference type="PDB" id="4WR6">
    <property type="method" value="X-ray"/>
    <property type="resolution" value="3.05 A"/>
    <property type="chains" value="52/5E=1-101"/>
</dbReference>
<dbReference type="PDB" id="4WRA">
    <property type="method" value="X-ray"/>
    <property type="resolution" value="3.05 A"/>
    <property type="chains" value="52/5E=1-101"/>
</dbReference>
<dbReference type="PDB" id="4WRO">
    <property type="method" value="X-ray"/>
    <property type="resolution" value="3.05 A"/>
    <property type="chains" value="5E=1-101"/>
</dbReference>
<dbReference type="PDB" id="4WSD">
    <property type="method" value="X-ray"/>
    <property type="resolution" value="2.95 A"/>
    <property type="chains" value="52/5E=1-101"/>
</dbReference>
<dbReference type="PDB" id="4WSM">
    <property type="method" value="X-ray"/>
    <property type="resolution" value="3.30 A"/>
    <property type="chains" value="52/5E=1-101"/>
</dbReference>
<dbReference type="PDB" id="4WT1">
    <property type="method" value="X-ray"/>
    <property type="resolution" value="3.05 A"/>
    <property type="chains" value="52/5E=1-101"/>
</dbReference>
<dbReference type="PDB" id="4WT8">
    <property type="method" value="X-ray"/>
    <property type="resolution" value="3.40 A"/>
    <property type="chains" value="AF/BF=1-101"/>
</dbReference>
<dbReference type="PDB" id="4WU1">
    <property type="method" value="X-ray"/>
    <property type="resolution" value="3.20 A"/>
    <property type="chains" value="52/5E=1-101"/>
</dbReference>
<dbReference type="PDB" id="4WZD">
    <property type="method" value="X-ray"/>
    <property type="resolution" value="3.10 A"/>
    <property type="chains" value="52/5E=1-101"/>
</dbReference>
<dbReference type="PDB" id="4WZO">
    <property type="method" value="X-ray"/>
    <property type="resolution" value="3.30 A"/>
    <property type="chains" value="52/5E=1-101"/>
</dbReference>
<dbReference type="PDB" id="4X62">
    <property type="method" value="X-ray"/>
    <property type="resolution" value="3.45 A"/>
    <property type="chains" value="F=1-101"/>
</dbReference>
<dbReference type="PDB" id="4X64">
    <property type="method" value="X-ray"/>
    <property type="resolution" value="3.35 A"/>
    <property type="chains" value="F=1-101"/>
</dbReference>
<dbReference type="PDB" id="4X65">
    <property type="method" value="X-ray"/>
    <property type="resolution" value="3.35 A"/>
    <property type="chains" value="F=1-101"/>
</dbReference>
<dbReference type="PDB" id="4X66">
    <property type="method" value="X-ray"/>
    <property type="resolution" value="3.45 A"/>
    <property type="chains" value="F=1-101"/>
</dbReference>
<dbReference type="PDB" id="4Y4O">
    <property type="method" value="X-ray"/>
    <property type="resolution" value="2.30 A"/>
    <property type="chains" value="1f/2f=1-101"/>
</dbReference>
<dbReference type="PDB" id="4Y4P">
    <property type="method" value="X-ray"/>
    <property type="resolution" value="2.50 A"/>
    <property type="chains" value="1f/2f=1-101"/>
</dbReference>
<dbReference type="PDB" id="4YHH">
    <property type="method" value="X-ray"/>
    <property type="resolution" value="3.42 A"/>
    <property type="chains" value="F=1-101"/>
</dbReference>
<dbReference type="PDB" id="4YPB">
    <property type="method" value="X-ray"/>
    <property type="resolution" value="3.40 A"/>
    <property type="chains" value="QF/XF=1-101"/>
</dbReference>
<dbReference type="PDB" id="4YY3">
    <property type="method" value="X-ray"/>
    <property type="resolution" value="3.60 A"/>
    <property type="chains" value="F=1-101"/>
</dbReference>
<dbReference type="PDB" id="4YZV">
    <property type="method" value="X-ray"/>
    <property type="resolution" value="3.10 A"/>
    <property type="chains" value="QF/XF=1-101"/>
</dbReference>
<dbReference type="PDB" id="4Z3S">
    <property type="method" value="X-ray"/>
    <property type="resolution" value="2.65 A"/>
    <property type="chains" value="1f/2f=1-101"/>
</dbReference>
<dbReference type="PDB" id="4Z8C">
    <property type="method" value="X-ray"/>
    <property type="resolution" value="2.90 A"/>
    <property type="chains" value="1f/2f=1-101"/>
</dbReference>
<dbReference type="PDB" id="4ZER">
    <property type="method" value="X-ray"/>
    <property type="resolution" value="3.10 A"/>
    <property type="chains" value="1f/2f=1-100"/>
</dbReference>
<dbReference type="PDB" id="4ZSN">
    <property type="method" value="X-ray"/>
    <property type="resolution" value="3.60 A"/>
    <property type="chains" value="QF/XF=1-101"/>
</dbReference>
<dbReference type="PDB" id="5A9Z">
    <property type="method" value="EM"/>
    <property type="resolution" value="4.70 A"/>
    <property type="chains" value="BJ=1-101"/>
</dbReference>
<dbReference type="PDB" id="5AA0">
    <property type="method" value="EM"/>
    <property type="resolution" value="5.00 A"/>
    <property type="chains" value="BJ=1-101"/>
</dbReference>
<dbReference type="PDB" id="5BR8">
    <property type="method" value="X-ray"/>
    <property type="resolution" value="3.40 A"/>
    <property type="chains" value="F=1-101"/>
</dbReference>
<dbReference type="PDB" id="5CZP">
    <property type="method" value="X-ray"/>
    <property type="resolution" value="3.30 A"/>
    <property type="chains" value="QF/XF=1-101"/>
</dbReference>
<dbReference type="PDB" id="5D8B">
    <property type="method" value="X-ray"/>
    <property type="resolution" value="3.63 A"/>
    <property type="chains" value="CC/GA=1-101"/>
</dbReference>
<dbReference type="PDB" id="5DFE">
    <property type="method" value="X-ray"/>
    <property type="resolution" value="3.10 A"/>
    <property type="chains" value="QF/XF=1-101"/>
</dbReference>
<dbReference type="PDB" id="5DOX">
    <property type="method" value="X-ray"/>
    <property type="resolution" value="3.10 A"/>
    <property type="chains" value="1f/2f=1-101"/>
</dbReference>
<dbReference type="PDB" id="5DOY">
    <property type="method" value="X-ray"/>
    <property type="resolution" value="2.60 A"/>
    <property type="chains" value="1f/2f=1-101"/>
</dbReference>
<dbReference type="PDB" id="5E7K">
    <property type="method" value="X-ray"/>
    <property type="resolution" value="3.20 A"/>
    <property type="chains" value="52/5E=1-101"/>
</dbReference>
<dbReference type="PDB" id="5E81">
    <property type="method" value="X-ray"/>
    <property type="resolution" value="2.95 A"/>
    <property type="chains" value="52/5E=1-101"/>
</dbReference>
<dbReference type="PDB" id="5EL4">
    <property type="method" value="X-ray"/>
    <property type="resolution" value="3.15 A"/>
    <property type="chains" value="52/5E=1-101"/>
</dbReference>
<dbReference type="PDB" id="5EL5">
    <property type="method" value="X-ray"/>
    <property type="resolution" value="3.15 A"/>
    <property type="chains" value="52/5E=1-101"/>
</dbReference>
<dbReference type="PDB" id="5EL6">
    <property type="method" value="X-ray"/>
    <property type="resolution" value="3.10 A"/>
    <property type="chains" value="52/5E=1-101"/>
</dbReference>
<dbReference type="PDB" id="5EL7">
    <property type="method" value="X-ray"/>
    <property type="resolution" value="3.15 A"/>
    <property type="chains" value="52/5E=1-101"/>
</dbReference>
<dbReference type="PDB" id="5F8K">
    <property type="method" value="X-ray"/>
    <property type="resolution" value="2.80 A"/>
    <property type="chains" value="1f/2f=1-100"/>
</dbReference>
<dbReference type="PDB" id="5FDU">
    <property type="method" value="X-ray"/>
    <property type="resolution" value="2.90 A"/>
    <property type="chains" value="1f/2f=1-100"/>
</dbReference>
<dbReference type="PDB" id="5FDV">
    <property type="method" value="X-ray"/>
    <property type="resolution" value="2.80 A"/>
    <property type="chains" value="1f/2f=1-100"/>
</dbReference>
<dbReference type="PDB" id="5HAU">
    <property type="method" value="X-ray"/>
    <property type="resolution" value="3.00 A"/>
    <property type="chains" value="1f/2f=1-101"/>
</dbReference>
<dbReference type="PDB" id="5HCP">
    <property type="method" value="X-ray"/>
    <property type="resolution" value="2.89 A"/>
    <property type="chains" value="1f/2f=1-101"/>
</dbReference>
<dbReference type="PDB" id="5HCQ">
    <property type="method" value="X-ray"/>
    <property type="resolution" value="2.80 A"/>
    <property type="chains" value="1f/2f=1-101"/>
</dbReference>
<dbReference type="PDB" id="5HCR">
    <property type="method" value="X-ray"/>
    <property type="resolution" value="2.80 A"/>
    <property type="chains" value="1f/2f=1-101"/>
</dbReference>
<dbReference type="PDB" id="5HD1">
    <property type="method" value="X-ray"/>
    <property type="resolution" value="2.70 A"/>
    <property type="chains" value="1f/2f=1-101"/>
</dbReference>
<dbReference type="PDB" id="5IB7">
    <property type="method" value="X-ray"/>
    <property type="resolution" value="2.99 A"/>
    <property type="chains" value="52/5E=1-101"/>
</dbReference>
<dbReference type="PDB" id="5IB8">
    <property type="method" value="X-ray"/>
    <property type="resolution" value="3.13 A"/>
    <property type="chains" value="52/5E=1-101"/>
</dbReference>
<dbReference type="PDB" id="5IBB">
    <property type="method" value="X-ray"/>
    <property type="resolution" value="2.96 A"/>
    <property type="chains" value="52/5E=1-101"/>
</dbReference>
<dbReference type="PDB" id="5IMQ">
    <property type="method" value="EM"/>
    <property type="resolution" value="3.80 A"/>
    <property type="chains" value="J=1-101"/>
</dbReference>
<dbReference type="PDB" id="5IMR">
    <property type="method" value="EM"/>
    <property type="chains" value="J=1-101"/>
</dbReference>
<dbReference type="PDB" id="5IWA">
    <property type="method" value="X-ray"/>
    <property type="resolution" value="3.50 A"/>
    <property type="chains" value="F=1-101"/>
</dbReference>
<dbReference type="PDB" id="5J30">
    <property type="method" value="X-ray"/>
    <property type="resolution" value="3.20 A"/>
    <property type="chains" value="QF/XF=1-101"/>
</dbReference>
<dbReference type="PDB" id="5J3C">
    <property type="method" value="X-ray"/>
    <property type="resolution" value="3.04 A"/>
    <property type="chains" value="QF/XF=1-101"/>
</dbReference>
<dbReference type="PDB" id="5J4B">
    <property type="method" value="X-ray"/>
    <property type="resolution" value="2.60 A"/>
    <property type="chains" value="1f/2f=1-101"/>
</dbReference>
<dbReference type="PDB" id="5J4C">
    <property type="method" value="X-ray"/>
    <property type="resolution" value="2.80 A"/>
    <property type="chains" value="1f/2f=1-101"/>
</dbReference>
<dbReference type="PDB" id="5J8B">
    <property type="method" value="X-ray"/>
    <property type="resolution" value="2.60 A"/>
    <property type="chains" value="f=1-101"/>
</dbReference>
<dbReference type="PDB" id="5LMN">
    <property type="method" value="EM"/>
    <property type="resolution" value="3.55 A"/>
    <property type="chains" value="F=1-101"/>
</dbReference>
<dbReference type="PDB" id="5LMO">
    <property type="method" value="EM"/>
    <property type="resolution" value="4.30 A"/>
    <property type="chains" value="F=1-101"/>
</dbReference>
<dbReference type="PDB" id="5LMP">
    <property type="method" value="EM"/>
    <property type="resolution" value="5.35 A"/>
    <property type="chains" value="F=1-101"/>
</dbReference>
<dbReference type="PDB" id="5LMQ">
    <property type="method" value="EM"/>
    <property type="resolution" value="4.20 A"/>
    <property type="chains" value="F=1-101"/>
</dbReference>
<dbReference type="PDB" id="5LMR">
    <property type="method" value="EM"/>
    <property type="resolution" value="4.45 A"/>
    <property type="chains" value="F=1-101"/>
</dbReference>
<dbReference type="PDB" id="5LMS">
    <property type="method" value="EM"/>
    <property type="resolution" value="5.10 A"/>
    <property type="chains" value="F=1-101"/>
</dbReference>
<dbReference type="PDB" id="5LMT">
    <property type="method" value="EM"/>
    <property type="resolution" value="4.15 A"/>
    <property type="chains" value="F=1-101"/>
</dbReference>
<dbReference type="PDB" id="5LMU">
    <property type="method" value="EM"/>
    <property type="resolution" value="4.00 A"/>
    <property type="chains" value="F=1-101"/>
</dbReference>
<dbReference type="PDB" id="5LMV">
    <property type="method" value="EM"/>
    <property type="resolution" value="4.90 A"/>
    <property type="chains" value="F=1-101"/>
</dbReference>
<dbReference type="PDB" id="5NDJ">
    <property type="method" value="X-ray"/>
    <property type="resolution" value="3.15 A"/>
    <property type="chains" value="52/5E=1-101"/>
</dbReference>
<dbReference type="PDB" id="5NDK">
    <property type="method" value="X-ray"/>
    <property type="resolution" value="2.95 A"/>
    <property type="chains" value="52/5E=1-101"/>
</dbReference>
<dbReference type="PDB" id="5OT7">
    <property type="method" value="EM"/>
    <property type="resolution" value="3.80 A"/>
    <property type="chains" value="E=1-101"/>
</dbReference>
<dbReference type="PDB" id="5UQ7">
    <property type="method" value="EM"/>
    <property type="resolution" value="3.50 A"/>
    <property type="chains" value="f=1-100"/>
</dbReference>
<dbReference type="PDB" id="5UQ8">
    <property type="method" value="EM"/>
    <property type="resolution" value="3.20 A"/>
    <property type="chains" value="f=1-100"/>
</dbReference>
<dbReference type="PDB" id="5VP2">
    <property type="method" value="X-ray"/>
    <property type="resolution" value="2.80 A"/>
    <property type="chains" value="1f/2f=1-101"/>
</dbReference>
<dbReference type="PDB" id="5VPO">
    <property type="method" value="X-ray"/>
    <property type="resolution" value="3.34 A"/>
    <property type="chains" value="QF/XF=1-101"/>
</dbReference>
<dbReference type="PDB" id="5VPP">
    <property type="method" value="X-ray"/>
    <property type="resolution" value="3.90 A"/>
    <property type="chains" value="QF/XF=1-101"/>
</dbReference>
<dbReference type="PDB" id="5W4K">
    <property type="method" value="X-ray"/>
    <property type="resolution" value="2.70 A"/>
    <property type="chains" value="1f/2f=1-101"/>
</dbReference>
<dbReference type="PDB" id="5WIS">
    <property type="method" value="X-ray"/>
    <property type="resolution" value="2.70 A"/>
    <property type="chains" value="1f/2f=1-101"/>
</dbReference>
<dbReference type="PDB" id="5WIT">
    <property type="method" value="X-ray"/>
    <property type="resolution" value="2.60 A"/>
    <property type="chains" value="1f/2f=1-101"/>
</dbReference>
<dbReference type="PDB" id="5WNP">
    <property type="method" value="X-ray"/>
    <property type="resolution" value="3.30 A"/>
    <property type="chains" value="F=1-101"/>
</dbReference>
<dbReference type="PDB" id="5WNQ">
    <property type="method" value="X-ray"/>
    <property type="resolution" value="3.50 A"/>
    <property type="chains" value="F=1-101"/>
</dbReference>
<dbReference type="PDB" id="5WNR">
    <property type="method" value="X-ray"/>
    <property type="resolution" value="3.50 A"/>
    <property type="chains" value="F=1-101"/>
</dbReference>
<dbReference type="PDB" id="5WNS">
    <property type="method" value="X-ray"/>
    <property type="resolution" value="3.50 A"/>
    <property type="chains" value="F=1-101"/>
</dbReference>
<dbReference type="PDB" id="5WNT">
    <property type="method" value="X-ray"/>
    <property type="resolution" value="3.30 A"/>
    <property type="chains" value="F=1-101"/>
</dbReference>
<dbReference type="PDB" id="5WNU">
    <property type="method" value="X-ray"/>
    <property type="resolution" value="3.40 A"/>
    <property type="chains" value="F=1-101"/>
</dbReference>
<dbReference type="PDB" id="5WNV">
    <property type="method" value="X-ray"/>
    <property type="resolution" value="3.30 A"/>
    <property type="chains" value="F=1-101"/>
</dbReference>
<dbReference type="PDB" id="5ZLU">
    <property type="method" value="EM"/>
    <property type="resolution" value="3.60 A"/>
    <property type="chains" value="L=1-101"/>
</dbReference>
<dbReference type="PDB" id="6BUW">
    <property type="method" value="X-ray"/>
    <property type="resolution" value="3.50 A"/>
    <property type="chains" value="QF/XF=1-101"/>
</dbReference>
<dbReference type="PDB" id="6BZ6">
    <property type="method" value="X-ray"/>
    <property type="resolution" value="3.18 A"/>
    <property type="chains" value="QF/XF=1-101"/>
</dbReference>
<dbReference type="PDB" id="6BZ7">
    <property type="method" value="X-ray"/>
    <property type="resolution" value="3.68 A"/>
    <property type="chains" value="QF/XF=1-101"/>
</dbReference>
<dbReference type="PDB" id="6BZ8">
    <property type="method" value="X-ray"/>
    <property type="resolution" value="3.74 A"/>
    <property type="chains" value="QF/XF=1-101"/>
</dbReference>
<dbReference type="PDB" id="6C5L">
    <property type="method" value="X-ray"/>
    <property type="resolution" value="3.20 A"/>
    <property type="chains" value="AF/CF=1-101"/>
</dbReference>
<dbReference type="PDB" id="6CAE">
    <property type="method" value="X-ray"/>
    <property type="resolution" value="2.60 A"/>
    <property type="chains" value="1f/2f=1-101"/>
</dbReference>
<dbReference type="PDB" id="6CAO">
    <property type="method" value="X-ray"/>
    <property type="resolution" value="3.45 A"/>
    <property type="chains" value="F=1-101"/>
</dbReference>
<dbReference type="PDB" id="6CAP">
    <property type="method" value="X-ray"/>
    <property type="resolution" value="3.40 A"/>
    <property type="chains" value="F=1-101"/>
</dbReference>
<dbReference type="PDB" id="6CAQ">
    <property type="method" value="X-ray"/>
    <property type="resolution" value="3.40 A"/>
    <property type="chains" value="F=1-101"/>
</dbReference>
<dbReference type="PDB" id="6CAR">
    <property type="method" value="X-ray"/>
    <property type="resolution" value="3.40 A"/>
    <property type="chains" value="F=1-101"/>
</dbReference>
<dbReference type="PDB" id="6CAS">
    <property type="method" value="X-ray"/>
    <property type="resolution" value="3.50 A"/>
    <property type="chains" value="F=1-101"/>
</dbReference>
<dbReference type="PDB" id="6CFJ">
    <property type="method" value="X-ray"/>
    <property type="resolution" value="2.80 A"/>
    <property type="chains" value="1f/2f=1-101"/>
</dbReference>
<dbReference type="PDB" id="6CFK">
    <property type="method" value="X-ray"/>
    <property type="resolution" value="2.70 A"/>
    <property type="chains" value="1f/2f=1-101"/>
</dbReference>
<dbReference type="PDB" id="6CFL">
    <property type="method" value="X-ray"/>
    <property type="resolution" value="2.60 A"/>
    <property type="chains" value="1f/2f=1-101"/>
</dbReference>
<dbReference type="PDB" id="6CZR">
    <property type="method" value="X-ray"/>
    <property type="resolution" value="3.14 A"/>
    <property type="chains" value="1f/2f=1-100"/>
</dbReference>
<dbReference type="PDB" id="6DTI">
    <property type="method" value="X-ray"/>
    <property type="resolution" value="3.54 A"/>
    <property type="chains" value="F=1-101"/>
</dbReference>
<dbReference type="PDB" id="6FKR">
    <property type="method" value="X-ray"/>
    <property type="resolution" value="3.20 A"/>
    <property type="chains" value="1f/2f=1-100"/>
</dbReference>
<dbReference type="PDB" id="6GSJ">
    <property type="method" value="X-ray"/>
    <property type="resolution" value="2.96 A"/>
    <property type="chains" value="52/5E=1-101"/>
</dbReference>
<dbReference type="PDB" id="6GSK">
    <property type="method" value="X-ray"/>
    <property type="resolution" value="3.36 A"/>
    <property type="chains" value="52/5E=1-101"/>
</dbReference>
<dbReference type="PDB" id="6GSL">
    <property type="method" value="X-ray"/>
    <property type="resolution" value="3.16 A"/>
    <property type="chains" value="52/5E=1-101"/>
</dbReference>
<dbReference type="PDB" id="6GZQ">
    <property type="method" value="EM"/>
    <property type="resolution" value="3.28 A"/>
    <property type="chains" value="F2=1-101"/>
</dbReference>
<dbReference type="PDB" id="6GZX">
    <property type="method" value="EM"/>
    <property type="resolution" value="4.57 A"/>
    <property type="chains" value="F3/F4=1-101"/>
</dbReference>
<dbReference type="PDB" id="6GZZ">
    <property type="method" value="EM"/>
    <property type="resolution" value="4.13 A"/>
    <property type="chains" value="F3/F4=1-101"/>
</dbReference>
<dbReference type="PDB" id="6I69">
    <property type="method" value="X-ray"/>
    <property type="resolution" value="1.20 A"/>
    <property type="chains" value="A=3-96"/>
</dbReference>
<dbReference type="PDB" id="6I6E">
    <property type="method" value="X-ray"/>
    <property type="resolution" value="1.20 A"/>
    <property type="chains" value="A=3-96"/>
</dbReference>
<dbReference type="PDB" id="6I6I">
    <property type="method" value="X-ray"/>
    <property type="resolution" value="1.50 A"/>
    <property type="chains" value="A/B=3-74"/>
</dbReference>
<dbReference type="PDB" id="6I6O">
    <property type="method" value="X-ray"/>
    <property type="resolution" value="1.90 A"/>
    <property type="chains" value="A/B/C/D=3-81"/>
</dbReference>
<dbReference type="PDB" id="6I6S">
    <property type="method" value="X-ray"/>
    <property type="resolution" value="1.46 A"/>
    <property type="chains" value="A/B=3-77"/>
</dbReference>
<dbReference type="PDB" id="6I6U">
    <property type="method" value="X-ray"/>
    <property type="resolution" value="1.57 A"/>
    <property type="chains" value="A/B=3-81"/>
</dbReference>
<dbReference type="PDB" id="6I6W">
    <property type="method" value="X-ray"/>
    <property type="resolution" value="1.49 A"/>
    <property type="chains" value="A=3-74"/>
</dbReference>
<dbReference type="PDB" id="6I6Y">
    <property type="method" value="X-ray"/>
    <property type="resolution" value="2.15 A"/>
    <property type="chains" value="A=3-81"/>
</dbReference>
<dbReference type="PDB" id="6MKN">
    <property type="method" value="X-ray"/>
    <property type="resolution" value="3.46 A"/>
    <property type="chains" value="F=1-101"/>
</dbReference>
<dbReference type="PDB" id="6MPF">
    <property type="method" value="X-ray"/>
    <property type="resolution" value="3.33 A"/>
    <property type="chains" value="F=1-101"/>
</dbReference>
<dbReference type="PDB" id="6MPI">
    <property type="method" value="X-ray"/>
    <property type="resolution" value="3.33 A"/>
    <property type="chains" value="F=1-101"/>
</dbReference>
<dbReference type="PDB" id="6N9E">
    <property type="method" value="X-ray"/>
    <property type="resolution" value="3.70 A"/>
    <property type="chains" value="1f/2f=1-101"/>
</dbReference>
<dbReference type="PDB" id="6N9F">
    <property type="method" value="X-ray"/>
    <property type="resolution" value="3.70 A"/>
    <property type="chains" value="1f/2f=1-101"/>
</dbReference>
<dbReference type="PDB" id="6ND5">
    <property type="method" value="X-ray"/>
    <property type="resolution" value="2.60 A"/>
    <property type="chains" value="1f/2f=1-101"/>
</dbReference>
<dbReference type="PDB" id="6ND6">
    <property type="method" value="X-ray"/>
    <property type="resolution" value="2.85 A"/>
    <property type="chains" value="1f/2f=1-101"/>
</dbReference>
<dbReference type="PDB" id="6NDK">
    <property type="method" value="X-ray"/>
    <property type="resolution" value="3.64 A"/>
    <property type="chains" value="QF/XF=1-101"/>
</dbReference>
<dbReference type="PDB" id="6NSH">
    <property type="method" value="X-ray"/>
    <property type="resolution" value="3.40 A"/>
    <property type="chains" value="QF/XF=1-101"/>
</dbReference>
<dbReference type="PDB" id="6NTA">
    <property type="method" value="X-ray"/>
    <property type="resolution" value="3.10 A"/>
    <property type="chains" value="QF/XF=1-101"/>
</dbReference>
<dbReference type="PDB" id="6NUO">
    <property type="method" value="X-ray"/>
    <property type="resolution" value="3.20 A"/>
    <property type="chains" value="QF/XF=1-101"/>
</dbReference>
<dbReference type="PDB" id="6NWY">
    <property type="method" value="X-ray"/>
    <property type="resolution" value="3.50 A"/>
    <property type="chains" value="QF/XF=1-101"/>
</dbReference>
<dbReference type="PDB" id="6NY6">
    <property type="method" value="X-ray"/>
    <property type="resolution" value="3.74 A"/>
    <property type="chains" value="F=1-101"/>
</dbReference>
<dbReference type="PDB" id="6O3M">
    <property type="method" value="X-ray"/>
    <property type="resolution" value="3.97 A"/>
    <property type="chains" value="QF/XF=1-101"/>
</dbReference>
<dbReference type="PDB" id="6O97">
    <property type="method" value="X-ray"/>
    <property type="resolution" value="2.75 A"/>
    <property type="chains" value="1f/2f=1-101"/>
</dbReference>
<dbReference type="PDB" id="6OF1">
    <property type="method" value="X-ray"/>
    <property type="resolution" value="2.80 A"/>
    <property type="chains" value="1f/2f=1-101"/>
</dbReference>
<dbReference type="PDB" id="6OF6">
    <property type="method" value="X-ray"/>
    <property type="resolution" value="3.20 A"/>
    <property type="chains" value="QF/XF=1-101"/>
</dbReference>
<dbReference type="PDB" id="6OJ2">
    <property type="method" value="X-ray"/>
    <property type="resolution" value="3.20 A"/>
    <property type="chains" value="QF/XF=1-101"/>
</dbReference>
<dbReference type="PDB" id="6OPE">
    <property type="method" value="X-ray"/>
    <property type="resolution" value="3.10 A"/>
    <property type="chains" value="QF/XF=1-101"/>
</dbReference>
<dbReference type="PDB" id="6ORD">
    <property type="method" value="X-ray"/>
    <property type="resolution" value="3.10 A"/>
    <property type="chains" value="QF/XF=1-101"/>
</dbReference>
<dbReference type="PDB" id="6OSI">
    <property type="method" value="X-ray"/>
    <property type="resolution" value="4.14 A"/>
    <property type="chains" value="QF/XF=1-101"/>
</dbReference>
<dbReference type="PDB" id="6OTR">
    <property type="method" value="X-ray"/>
    <property type="resolution" value="3.12 A"/>
    <property type="chains" value="QF/XF=1-101"/>
</dbReference>
<dbReference type="PDB" id="6OXA">
    <property type="method" value="X-ray"/>
    <property type="resolution" value="3.25 A"/>
    <property type="chains" value="QF/XF=1-101"/>
</dbReference>
<dbReference type="PDB" id="6OXI">
    <property type="method" value="X-ray"/>
    <property type="resolution" value="3.50 A"/>
    <property type="chains" value="QF/XF=1-101"/>
</dbReference>
<dbReference type="PDB" id="6Q95">
    <property type="method" value="EM"/>
    <property type="resolution" value="3.70 A"/>
    <property type="chains" value="k=1-101"/>
</dbReference>
<dbReference type="PDB" id="6QNQ">
    <property type="method" value="X-ray"/>
    <property type="resolution" value="3.50 A"/>
    <property type="chains" value="52/5E=1-101"/>
</dbReference>
<dbReference type="PDB" id="6QNR">
    <property type="method" value="X-ray"/>
    <property type="resolution" value="3.10 A"/>
    <property type="chains" value="52/5E=1-101"/>
</dbReference>
<dbReference type="PDB" id="6UCQ">
    <property type="method" value="X-ray"/>
    <property type="resolution" value="3.50 A"/>
    <property type="chains" value="1f/2f=1-101"/>
</dbReference>
<dbReference type="PDB" id="6UO1">
    <property type="method" value="X-ray"/>
    <property type="resolution" value="2.95 A"/>
    <property type="chains" value="1f/2f=1-101"/>
</dbReference>
<dbReference type="PDB" id="6XHV">
    <property type="method" value="X-ray"/>
    <property type="resolution" value="2.40 A"/>
    <property type="chains" value="1f/2f=1-101"/>
</dbReference>
<dbReference type="PDB" id="6XHW">
    <property type="method" value="X-ray"/>
    <property type="resolution" value="2.50 A"/>
    <property type="chains" value="1f/2f=1-101"/>
</dbReference>
<dbReference type="PDB" id="6XHX">
    <property type="method" value="X-ray"/>
    <property type="resolution" value="2.55 A"/>
    <property type="chains" value="1f/2f=1-101"/>
</dbReference>
<dbReference type="PDB" id="6XHY">
    <property type="method" value="X-ray"/>
    <property type="resolution" value="2.60 A"/>
    <property type="chains" value="1f/2f=1-101"/>
</dbReference>
<dbReference type="PDB" id="6XQD">
    <property type="method" value="X-ray"/>
    <property type="resolution" value="2.80 A"/>
    <property type="chains" value="1f/2f=1-101"/>
</dbReference>
<dbReference type="PDB" id="6XQE">
    <property type="method" value="X-ray"/>
    <property type="resolution" value="3.00 A"/>
    <property type="chains" value="1f/2f=1-101"/>
</dbReference>
<dbReference type="PDB" id="7AZO">
    <property type="method" value="X-ray"/>
    <property type="resolution" value="3.30 A"/>
    <property type="chains" value="S6A/S6B=1-101"/>
</dbReference>
<dbReference type="PDB" id="7AZS">
    <property type="method" value="X-ray"/>
    <property type="resolution" value="3.10 A"/>
    <property type="chains" value="S6A/S6B=1-101"/>
</dbReference>
<dbReference type="PDB" id="7B8V">
    <property type="method" value="X-ray"/>
    <property type="resolution" value="1.86 A"/>
    <property type="chains" value="A/B/C/D/E/F/G/H/I/J/K/L/M/N/O/P/Q/R/S/T/U/V/W/X=3-54"/>
</dbReference>
<dbReference type="PDB" id="7B90">
    <property type="method" value="X-ray"/>
    <property type="resolution" value="2.05 A"/>
    <property type="chains" value="A/B/C/D/E/F/G/H/I/J/K/L=3-46"/>
</dbReference>
<dbReference type="PDB" id="7BFC">
    <property type="method" value="X-ray"/>
    <property type="resolution" value="2.13 A"/>
    <property type="chains" value="A/B/C/D/E/F/G/H/I/J/K/L/M/N=3-46"/>
</dbReference>
<dbReference type="PDB" id="7BFD">
    <property type="method" value="X-ray"/>
    <property type="resolution" value="2.57 A"/>
    <property type="chains" value="A/B/C/D/E/F/G/H/I/J/K/L=3-46"/>
</dbReference>
<dbReference type="PDB" id="7BFE">
    <property type="method" value="X-ray"/>
    <property type="resolution" value="1.95 A"/>
    <property type="chains" value="A/B/C/D/E/F=3-46"/>
</dbReference>
<dbReference type="PDB" id="7BFF">
    <property type="method" value="X-ray"/>
    <property type="resolution" value="1.66 A"/>
    <property type="chains" value="A/B/C/D/E/F=3-46"/>
</dbReference>
<dbReference type="PDB" id="7BFG">
    <property type="method" value="X-ray"/>
    <property type="resolution" value="2.01 A"/>
    <property type="chains" value="A/B/C/D/E/F/G/H/I/J/K/L=3-46"/>
</dbReference>
<dbReference type="PDB" id="7DUG">
    <property type="method" value="X-ray"/>
    <property type="resolution" value="3.75 A"/>
    <property type="chains" value="F=1-101"/>
</dbReference>
<dbReference type="PDB" id="7DUH">
    <property type="method" value="X-ray"/>
    <property type="resolution" value="3.75 A"/>
    <property type="chains" value="F=1-101"/>
</dbReference>
<dbReference type="PDB" id="7DUI">
    <property type="method" value="X-ray"/>
    <property type="resolution" value="3.62 A"/>
    <property type="chains" value="F=1-101"/>
</dbReference>
<dbReference type="PDB" id="7DUJ">
    <property type="method" value="X-ray"/>
    <property type="resolution" value="3.75 A"/>
    <property type="chains" value="F=1-101"/>
</dbReference>
<dbReference type="PDB" id="7DUK">
    <property type="method" value="X-ray"/>
    <property type="resolution" value="3.60 A"/>
    <property type="chains" value="F=1-101"/>
</dbReference>
<dbReference type="PDB" id="7DUL">
    <property type="method" value="X-ray"/>
    <property type="resolution" value="3.62 A"/>
    <property type="chains" value="F=1-101"/>
</dbReference>
<dbReference type="PDB" id="7JQL">
    <property type="method" value="X-ray"/>
    <property type="resolution" value="3.00 A"/>
    <property type="chains" value="1f/2f=1-101"/>
</dbReference>
<dbReference type="PDB" id="7JQM">
    <property type="method" value="X-ray"/>
    <property type="resolution" value="3.05 A"/>
    <property type="chains" value="1f/2f=1-101"/>
</dbReference>
<dbReference type="PDB" id="7LH5">
    <property type="method" value="X-ray"/>
    <property type="resolution" value="3.27 A"/>
    <property type="chains" value="AF/CF=1-101"/>
</dbReference>
<dbReference type="PDB" id="7MD7">
    <property type="method" value="X-ray"/>
    <property type="resolution" value="2.80 A"/>
    <property type="chains" value="1f/2f=1-101"/>
</dbReference>
<dbReference type="PDB" id="7OS7">
    <property type="method" value="X-ray"/>
    <property type="resolution" value="1.65 A"/>
    <property type="chains" value="A/B=3-81"/>
</dbReference>
<dbReference type="PDB" id="7RQ8">
    <property type="method" value="X-ray"/>
    <property type="resolution" value="2.50 A"/>
    <property type="chains" value="1f/2f=1-101"/>
</dbReference>
<dbReference type="PDB" id="7RQ9">
    <property type="method" value="X-ray"/>
    <property type="resolution" value="2.60 A"/>
    <property type="chains" value="1f/2f=1-101"/>
</dbReference>
<dbReference type="PDB" id="7RQA">
    <property type="method" value="X-ray"/>
    <property type="resolution" value="2.40 A"/>
    <property type="chains" value="1f/2f=1-101"/>
</dbReference>
<dbReference type="PDB" id="7RQB">
    <property type="method" value="X-ray"/>
    <property type="resolution" value="2.45 A"/>
    <property type="chains" value="1f/2f=1-101"/>
</dbReference>
<dbReference type="PDB" id="7RQC">
    <property type="method" value="X-ray"/>
    <property type="resolution" value="2.50 A"/>
    <property type="chains" value="1f/2f=1-101"/>
</dbReference>
<dbReference type="PDB" id="7RQD">
    <property type="method" value="X-ray"/>
    <property type="resolution" value="2.50 A"/>
    <property type="chains" value="1f/2f=1-101"/>
</dbReference>
<dbReference type="PDB" id="7RQE">
    <property type="method" value="X-ray"/>
    <property type="resolution" value="2.40 A"/>
    <property type="chains" value="1f/2f=1-101"/>
</dbReference>
<dbReference type="PDB" id="7U2H">
    <property type="method" value="X-ray"/>
    <property type="resolution" value="2.55 A"/>
    <property type="chains" value="1f/2f=1-101"/>
</dbReference>
<dbReference type="PDB" id="7U2I">
    <property type="method" value="X-ray"/>
    <property type="resolution" value="2.55 A"/>
    <property type="chains" value="1f/2f=1-101"/>
</dbReference>
<dbReference type="PDB" id="7U2J">
    <property type="method" value="X-ray"/>
    <property type="resolution" value="2.55 A"/>
    <property type="chains" value="1f/2f=1-101"/>
</dbReference>
<dbReference type="PDB" id="7V2L">
    <property type="method" value="EM"/>
    <property type="resolution" value="3.30 A"/>
    <property type="chains" value="F=1-101"/>
</dbReference>
<dbReference type="PDB" id="7V2M">
    <property type="method" value="EM"/>
    <property type="resolution" value="3.40 A"/>
    <property type="chains" value="F=1-101"/>
</dbReference>
<dbReference type="PDB" id="7V2N">
    <property type="method" value="EM"/>
    <property type="resolution" value="3.60 A"/>
    <property type="chains" value="F=1-101"/>
</dbReference>
<dbReference type="PDB" id="7V2O">
    <property type="method" value="EM"/>
    <property type="resolution" value="3.50 A"/>
    <property type="chains" value="F=1-101"/>
</dbReference>
<dbReference type="PDB" id="7V2P">
    <property type="method" value="EM"/>
    <property type="resolution" value="3.30 A"/>
    <property type="chains" value="F=1-101"/>
</dbReference>
<dbReference type="PDB" id="7V2Q">
    <property type="method" value="EM"/>
    <property type="resolution" value="3.24 A"/>
    <property type="chains" value="F=1-101"/>
</dbReference>
<dbReference type="PDB" id="8CVJ">
    <property type="method" value="X-ray"/>
    <property type="resolution" value="2.40 A"/>
    <property type="chains" value="1f/2f=1-101"/>
</dbReference>
<dbReference type="PDB" id="8CVK">
    <property type="method" value="X-ray"/>
    <property type="resolution" value="2.50 A"/>
    <property type="chains" value="1f/2f=1-101"/>
</dbReference>
<dbReference type="PDB" id="8CVL">
    <property type="method" value="X-ray"/>
    <property type="resolution" value="2.30 A"/>
    <property type="chains" value="1f/2f=1-101"/>
</dbReference>
<dbReference type="PDB" id="8EKB">
    <property type="method" value="X-ray"/>
    <property type="resolution" value="2.70 A"/>
    <property type="chains" value="1f/2f=1-101"/>
</dbReference>
<dbReference type="PDB" id="8EV6">
    <property type="method" value="X-ray"/>
    <property type="resolution" value="2.95 A"/>
    <property type="chains" value="1f/2f=1-101"/>
</dbReference>
<dbReference type="PDB" id="8EV7">
    <property type="method" value="X-ray"/>
    <property type="resolution" value="2.89 A"/>
    <property type="chains" value="1f/2f=1-101"/>
</dbReference>
<dbReference type="PDB" id="8FC1">
    <property type="method" value="X-ray"/>
    <property type="resolution" value="2.50 A"/>
    <property type="chains" value="1f/2f=1-101"/>
</dbReference>
<dbReference type="PDB" id="8FC2">
    <property type="method" value="X-ray"/>
    <property type="resolution" value="2.50 A"/>
    <property type="chains" value="1f/2f=1-101"/>
</dbReference>
<dbReference type="PDB" id="8FC3">
    <property type="method" value="X-ray"/>
    <property type="resolution" value="2.60 A"/>
    <property type="chains" value="1f/2f=1-101"/>
</dbReference>
<dbReference type="PDB" id="8FC4">
    <property type="method" value="X-ray"/>
    <property type="resolution" value="2.45 A"/>
    <property type="chains" value="1f/2f=1-101"/>
</dbReference>
<dbReference type="PDB" id="8FC5">
    <property type="method" value="X-ray"/>
    <property type="resolution" value="2.65 A"/>
    <property type="chains" value="1f/2f=1-101"/>
</dbReference>
<dbReference type="PDB" id="8FC6">
    <property type="method" value="X-ray"/>
    <property type="resolution" value="2.35 A"/>
    <property type="chains" value="1f/2f=1-101"/>
</dbReference>
<dbReference type="PDB" id="8FOM">
    <property type="method" value="X-ray"/>
    <property type="resolution" value="3.58 A"/>
    <property type="chains" value="QF/XF=1-101"/>
</dbReference>
<dbReference type="PDB" id="8FON">
    <property type="method" value="X-ray"/>
    <property type="resolution" value="3.64 A"/>
    <property type="chains" value="QF/XF=1-101"/>
</dbReference>
<dbReference type="PDB" id="8G29">
    <property type="method" value="X-ray"/>
    <property type="resolution" value="2.55 A"/>
    <property type="chains" value="1f/2f=1-101"/>
</dbReference>
<dbReference type="PDB" id="8G2A">
    <property type="method" value="X-ray"/>
    <property type="resolution" value="2.45 A"/>
    <property type="chains" value="1f/2f=1-101"/>
</dbReference>
<dbReference type="PDB" id="8G2B">
    <property type="method" value="X-ray"/>
    <property type="resolution" value="2.55 A"/>
    <property type="chains" value="1f/2f=1-101"/>
</dbReference>
<dbReference type="PDB" id="8G2C">
    <property type="method" value="X-ray"/>
    <property type="resolution" value="2.65 A"/>
    <property type="chains" value="1f/2f=1-101"/>
</dbReference>
<dbReference type="PDB" id="8G2D">
    <property type="method" value="X-ray"/>
    <property type="resolution" value="2.70 A"/>
    <property type="chains" value="1f/2f=1-101"/>
</dbReference>
<dbReference type="PDB" id="8T8B">
    <property type="method" value="X-ray"/>
    <property type="resolution" value="2.65 A"/>
    <property type="chains" value="1f/2f=1-101"/>
</dbReference>
<dbReference type="PDB" id="8T8C">
    <property type="method" value="X-ray"/>
    <property type="resolution" value="2.60 A"/>
    <property type="chains" value="1f/2f=1-101"/>
</dbReference>
<dbReference type="PDB" id="8UD6">
    <property type="method" value="X-ray"/>
    <property type="resolution" value="2.70 A"/>
    <property type="chains" value="1f/2f=1-101"/>
</dbReference>
<dbReference type="PDB" id="8UD7">
    <property type="method" value="X-ray"/>
    <property type="resolution" value="2.55 A"/>
    <property type="chains" value="1f/2f=1-101"/>
</dbReference>
<dbReference type="PDB" id="8UD8">
    <property type="method" value="X-ray"/>
    <property type="resolution" value="2.60 A"/>
    <property type="chains" value="1f/2f=1-101"/>
</dbReference>
<dbReference type="PDB" id="8UVR">
    <property type="method" value="X-ray"/>
    <property type="resolution" value="2.60 A"/>
    <property type="chains" value="1f/2f=1-101"/>
</dbReference>
<dbReference type="PDB" id="8UVS">
    <property type="method" value="X-ray"/>
    <property type="resolution" value="2.75 A"/>
    <property type="chains" value="1f/2f=1-101"/>
</dbReference>
<dbReference type="PDB" id="8VTU">
    <property type="method" value="X-ray"/>
    <property type="resolution" value="2.40 A"/>
    <property type="chains" value="1f/2f=1-101"/>
</dbReference>
<dbReference type="PDB" id="8VTV">
    <property type="method" value="X-ray"/>
    <property type="resolution" value="2.55 A"/>
    <property type="chains" value="1f/2f=1-101"/>
</dbReference>
<dbReference type="PDB" id="8VTW">
    <property type="method" value="X-ray"/>
    <property type="resolution" value="2.35 A"/>
    <property type="chains" value="1f/2f=1-101"/>
</dbReference>
<dbReference type="PDB" id="8VTX">
    <property type="method" value="X-ray"/>
    <property type="resolution" value="2.40 A"/>
    <property type="chains" value="1f/2f=1-101"/>
</dbReference>
<dbReference type="PDB" id="8VTY">
    <property type="method" value="X-ray"/>
    <property type="resolution" value="2.60 A"/>
    <property type="chains" value="1f/2f=1-101"/>
</dbReference>
<dbReference type="PDB" id="9B00">
    <property type="method" value="X-ray"/>
    <property type="resolution" value="2.80 A"/>
    <property type="chains" value="1f/2f=1-101"/>
</dbReference>
<dbReference type="PDB" id="9D0J">
    <property type="method" value="X-ray"/>
    <property type="resolution" value="2.50 A"/>
    <property type="chains" value="1f/2f=1-101"/>
</dbReference>
<dbReference type="PDB" id="9D7R">
    <property type="method" value="X-ray"/>
    <property type="resolution" value="2.70 A"/>
    <property type="chains" value="1f/2f=1-101"/>
</dbReference>
<dbReference type="PDB" id="9D7S">
    <property type="method" value="X-ray"/>
    <property type="resolution" value="2.85 A"/>
    <property type="chains" value="1f/2f=1-101"/>
</dbReference>
<dbReference type="PDB" id="9D7T">
    <property type="method" value="X-ray"/>
    <property type="resolution" value="2.70 A"/>
    <property type="chains" value="1f/2f=1-101"/>
</dbReference>
<dbReference type="PDB" id="9DFC">
    <property type="method" value="X-ray"/>
    <property type="resolution" value="2.50 A"/>
    <property type="chains" value="1f/2f=1-101"/>
</dbReference>
<dbReference type="PDB" id="9DFD">
    <property type="method" value="X-ray"/>
    <property type="resolution" value="2.60 A"/>
    <property type="chains" value="1f/2f=1-101"/>
</dbReference>
<dbReference type="PDB" id="9DFE">
    <property type="method" value="X-ray"/>
    <property type="resolution" value="2.60 A"/>
    <property type="chains" value="1f/2f=1-101"/>
</dbReference>
<dbReference type="PDBsum" id="1FJG"/>
<dbReference type="PDBsum" id="1FKA"/>
<dbReference type="PDBsum" id="1G1X"/>
<dbReference type="PDBsum" id="1HNW"/>
<dbReference type="PDBsum" id="1HNX"/>
<dbReference type="PDBsum" id="1HNZ"/>
<dbReference type="PDBsum" id="1HR0"/>
<dbReference type="PDBsum" id="1I94"/>
<dbReference type="PDBsum" id="1I95"/>
<dbReference type="PDBsum" id="1I96"/>
<dbReference type="PDBsum" id="1I97"/>
<dbReference type="PDBsum" id="1IBK"/>
<dbReference type="PDBsum" id="1IBL"/>
<dbReference type="PDBsum" id="1IBM"/>
<dbReference type="PDBsum" id="1J5E"/>
<dbReference type="PDBsum" id="1JGO"/>
<dbReference type="PDBsum" id="1JGP"/>
<dbReference type="PDBsum" id="1JGQ"/>
<dbReference type="PDBsum" id="1ML5"/>
<dbReference type="PDBsum" id="1N32"/>
<dbReference type="PDBsum" id="1N33"/>
<dbReference type="PDBsum" id="1N34"/>
<dbReference type="PDBsum" id="1N36"/>
<dbReference type="PDBsum" id="1QD7"/>
<dbReference type="PDBsum" id="1VVJ"/>
<dbReference type="PDBsum" id="1VY4"/>
<dbReference type="PDBsum" id="1VY5"/>
<dbReference type="PDBsum" id="1VY6"/>
<dbReference type="PDBsum" id="1VY7"/>
<dbReference type="PDBsum" id="1XMO"/>
<dbReference type="PDBsum" id="1XMQ"/>
<dbReference type="PDBsum" id="1XNQ"/>
<dbReference type="PDBsum" id="1XNR"/>
<dbReference type="PDBsum" id="2E5L"/>
<dbReference type="PDBsum" id="2F4V"/>
<dbReference type="PDBsum" id="2HHH"/>
<dbReference type="PDBsum" id="2KJV"/>
<dbReference type="PDBsum" id="2KJW"/>
<dbReference type="PDBsum" id="2UU9"/>
<dbReference type="PDBsum" id="2UUA"/>
<dbReference type="PDBsum" id="2UUB"/>
<dbReference type="PDBsum" id="2UUC"/>
<dbReference type="PDBsum" id="2UXB"/>
<dbReference type="PDBsum" id="2UXC"/>
<dbReference type="PDBsum" id="2UXD"/>
<dbReference type="PDBsum" id="2VQE"/>
<dbReference type="PDBsum" id="2VQF"/>
<dbReference type="PDBsum" id="2ZM6"/>
<dbReference type="PDBsum" id="3OTO"/>
<dbReference type="PDBsum" id="3T1H"/>
<dbReference type="PDBsum" id="3T1Y"/>
<dbReference type="PDBsum" id="3ZZP"/>
<dbReference type="PDBsum" id="4AQY"/>
<dbReference type="PDBsum" id="4B3M"/>
<dbReference type="PDBsum" id="4B3R"/>
<dbReference type="PDBsum" id="4B3S"/>
<dbReference type="PDBsum" id="4B3T"/>
<dbReference type="PDBsum" id="4DR1"/>
<dbReference type="PDBsum" id="4DR2"/>
<dbReference type="PDBsum" id="4DR3"/>
<dbReference type="PDBsum" id="4DR4"/>
<dbReference type="PDBsum" id="4DR5"/>
<dbReference type="PDBsum" id="4DR6"/>
<dbReference type="PDBsum" id="4DR7"/>
<dbReference type="PDBsum" id="4DUY"/>
<dbReference type="PDBsum" id="4DUZ"/>
<dbReference type="PDBsum" id="4DV0"/>
<dbReference type="PDBsum" id="4DV1"/>
<dbReference type="PDBsum" id="4DV2"/>
<dbReference type="PDBsum" id="4DV3"/>
<dbReference type="PDBsum" id="4DV4"/>
<dbReference type="PDBsum" id="4DV5"/>
<dbReference type="PDBsum" id="4DV6"/>
<dbReference type="PDBsum" id="4DV7"/>
<dbReference type="PDBsum" id="4GKJ"/>
<dbReference type="PDBsum" id="4GKK"/>
<dbReference type="PDBsum" id="4JI0"/>
<dbReference type="PDBsum" id="4JI1"/>
<dbReference type="PDBsum" id="4JI2"/>
<dbReference type="PDBsum" id="4JI3"/>
<dbReference type="PDBsum" id="4JI4"/>
<dbReference type="PDBsum" id="4JI5"/>
<dbReference type="PDBsum" id="4JI6"/>
<dbReference type="PDBsum" id="4JI7"/>
<dbReference type="PDBsum" id="4JI8"/>
<dbReference type="PDBsum" id="4JV5"/>
<dbReference type="PDBsum" id="4JYA"/>
<dbReference type="PDBsum" id="4K0K"/>
<dbReference type="PDBsum" id="4KHP"/>
<dbReference type="PDBsum" id="4L47"/>
<dbReference type="PDBsum" id="4L71"/>
<dbReference type="PDBsum" id="4LEL"/>
<dbReference type="PDBsum" id="4LF4"/>
<dbReference type="PDBsum" id="4LF5"/>
<dbReference type="PDBsum" id="4LF6"/>
<dbReference type="PDBsum" id="4LF7"/>
<dbReference type="PDBsum" id="4LF8"/>
<dbReference type="PDBsum" id="4LF9"/>
<dbReference type="PDBsum" id="4LFA"/>
<dbReference type="PDBsum" id="4LFB"/>
<dbReference type="PDBsum" id="4LFC"/>
<dbReference type="PDBsum" id="4LFZ"/>
<dbReference type="PDBsum" id="4LNT"/>
<dbReference type="PDBsum" id="4LSK"/>
<dbReference type="PDBsum" id="4LT8"/>
<dbReference type="PDBsum" id="4NXM"/>
<dbReference type="PDBsum" id="4NXN"/>
<dbReference type="PDBsum" id="4OX9"/>
<dbReference type="PDBsum" id="4P6F"/>
<dbReference type="PDBsum" id="4P70"/>
<dbReference type="PDBsum" id="4TUA"/>
<dbReference type="PDBsum" id="4TUB"/>
<dbReference type="PDBsum" id="4TUC"/>
<dbReference type="PDBsum" id="4TUD"/>
<dbReference type="PDBsum" id="4TUE"/>
<dbReference type="PDBsum" id="4V42"/>
<dbReference type="PDBsum" id="4V49"/>
<dbReference type="PDBsum" id="4V4A"/>
<dbReference type="PDBsum" id="4V4I"/>
<dbReference type="PDBsum" id="4V4P"/>
<dbReference type="PDBsum" id="4V4R"/>
<dbReference type="PDBsum" id="4V4S"/>
<dbReference type="PDBsum" id="4V4T"/>
<dbReference type="PDBsum" id="4V4X"/>
<dbReference type="PDBsum" id="4V4Y"/>
<dbReference type="PDBsum" id="4V4Z"/>
<dbReference type="PDBsum" id="4V51"/>
<dbReference type="PDBsum" id="4V5A"/>
<dbReference type="PDBsum" id="4V5C"/>
<dbReference type="PDBsum" id="4V5D"/>
<dbReference type="PDBsum" id="4V5E"/>
<dbReference type="PDBsum" id="4V5F"/>
<dbReference type="PDBsum" id="4V5G"/>
<dbReference type="PDBsum" id="4V5J"/>
<dbReference type="PDBsum" id="4V5K"/>
<dbReference type="PDBsum" id="4V5L"/>
<dbReference type="PDBsum" id="4V5M"/>
<dbReference type="PDBsum" id="4V5N"/>
<dbReference type="PDBsum" id="4V5P"/>
<dbReference type="PDBsum" id="4V5Q"/>
<dbReference type="PDBsum" id="4V5R"/>
<dbReference type="PDBsum" id="4V5S"/>
<dbReference type="PDBsum" id="4V68"/>
<dbReference type="PDBsum" id="4V6A"/>
<dbReference type="PDBsum" id="4V6F"/>
<dbReference type="PDBsum" id="4V6G"/>
<dbReference type="PDBsum" id="4V7J"/>
<dbReference type="PDBsum" id="4V7K"/>
<dbReference type="PDBsum" id="4V7L"/>
<dbReference type="PDBsum" id="4V7M"/>
<dbReference type="PDBsum" id="4V7W"/>
<dbReference type="PDBsum" id="4V7X"/>
<dbReference type="PDBsum" id="4V7Y"/>
<dbReference type="PDBsum" id="4V7Z"/>
<dbReference type="PDBsum" id="4V87"/>
<dbReference type="PDBsum" id="4V8A"/>
<dbReference type="PDBsum" id="4V8B"/>
<dbReference type="PDBsum" id="4V8C"/>
<dbReference type="PDBsum" id="4V8D"/>
<dbReference type="PDBsum" id="4V8E"/>
<dbReference type="PDBsum" id="4V8F"/>
<dbReference type="PDBsum" id="4V8G"/>
<dbReference type="PDBsum" id="4V8H"/>
<dbReference type="PDBsum" id="4V8I"/>
<dbReference type="PDBsum" id="4V8J"/>
<dbReference type="PDBsum" id="4V8N"/>
<dbReference type="PDBsum" id="4V8O"/>
<dbReference type="PDBsum" id="4V8Q"/>
<dbReference type="PDBsum" id="4V8U"/>
<dbReference type="PDBsum" id="4V8X"/>
<dbReference type="PDBsum" id="4V90"/>
<dbReference type="PDBsum" id="4V95"/>
<dbReference type="PDBsum" id="4V97"/>
<dbReference type="PDBsum" id="4V9A"/>
<dbReference type="PDBsum" id="4V9B"/>
<dbReference type="PDBsum" id="4V9H"/>
<dbReference type="PDBsum" id="4V9I"/>
<dbReference type="PDBsum" id="4V9R"/>
<dbReference type="PDBsum" id="4V9S"/>
<dbReference type="PDBsum" id="4W2E"/>
<dbReference type="PDBsum" id="4W2F"/>
<dbReference type="PDBsum" id="4W2G"/>
<dbReference type="PDBsum" id="4W2H"/>
<dbReference type="PDBsum" id="4W2I"/>
<dbReference type="PDBsum" id="4W4G"/>
<dbReference type="PDBsum" id="4WPO"/>
<dbReference type="PDBsum" id="4WQ1"/>
<dbReference type="PDBsum" id="4WQF"/>
<dbReference type="PDBsum" id="4WQR"/>
<dbReference type="PDBsum" id="4WQU"/>
<dbReference type="PDBsum" id="4WQY"/>
<dbReference type="PDBsum" id="4WR6"/>
<dbReference type="PDBsum" id="4WRA"/>
<dbReference type="PDBsum" id="4WRO"/>
<dbReference type="PDBsum" id="4WSD"/>
<dbReference type="PDBsum" id="4WSM"/>
<dbReference type="PDBsum" id="4WT1"/>
<dbReference type="PDBsum" id="4WT8"/>
<dbReference type="PDBsum" id="4WU1"/>
<dbReference type="PDBsum" id="4WZD"/>
<dbReference type="PDBsum" id="4WZO"/>
<dbReference type="PDBsum" id="4X62"/>
<dbReference type="PDBsum" id="4X64"/>
<dbReference type="PDBsum" id="4X65"/>
<dbReference type="PDBsum" id="4X66"/>
<dbReference type="PDBsum" id="4Y4O"/>
<dbReference type="PDBsum" id="4Y4P"/>
<dbReference type="PDBsum" id="4YHH"/>
<dbReference type="PDBsum" id="4YPB"/>
<dbReference type="PDBsum" id="4YY3"/>
<dbReference type="PDBsum" id="4YZV"/>
<dbReference type="PDBsum" id="4Z3S"/>
<dbReference type="PDBsum" id="4Z8C"/>
<dbReference type="PDBsum" id="4ZER"/>
<dbReference type="PDBsum" id="4ZSN"/>
<dbReference type="PDBsum" id="5A9Z"/>
<dbReference type="PDBsum" id="5AA0"/>
<dbReference type="PDBsum" id="5BR8"/>
<dbReference type="PDBsum" id="5CZP"/>
<dbReference type="PDBsum" id="5D8B"/>
<dbReference type="PDBsum" id="5DFE"/>
<dbReference type="PDBsum" id="5DOX"/>
<dbReference type="PDBsum" id="5DOY"/>
<dbReference type="PDBsum" id="5E7K"/>
<dbReference type="PDBsum" id="5E81"/>
<dbReference type="PDBsum" id="5EL4"/>
<dbReference type="PDBsum" id="5EL5"/>
<dbReference type="PDBsum" id="5EL6"/>
<dbReference type="PDBsum" id="5EL7"/>
<dbReference type="PDBsum" id="5F8K"/>
<dbReference type="PDBsum" id="5FDU"/>
<dbReference type="PDBsum" id="5FDV"/>
<dbReference type="PDBsum" id="5HAU"/>
<dbReference type="PDBsum" id="5HCP"/>
<dbReference type="PDBsum" id="5HCQ"/>
<dbReference type="PDBsum" id="5HCR"/>
<dbReference type="PDBsum" id="5HD1"/>
<dbReference type="PDBsum" id="5IB7"/>
<dbReference type="PDBsum" id="5IB8"/>
<dbReference type="PDBsum" id="5IBB"/>
<dbReference type="PDBsum" id="5IMQ"/>
<dbReference type="PDBsum" id="5IMR"/>
<dbReference type="PDBsum" id="5IWA"/>
<dbReference type="PDBsum" id="5J30"/>
<dbReference type="PDBsum" id="5J3C"/>
<dbReference type="PDBsum" id="5J4B"/>
<dbReference type="PDBsum" id="5J4C"/>
<dbReference type="PDBsum" id="5J8B"/>
<dbReference type="PDBsum" id="5LMN"/>
<dbReference type="PDBsum" id="5LMO"/>
<dbReference type="PDBsum" id="5LMP"/>
<dbReference type="PDBsum" id="5LMQ"/>
<dbReference type="PDBsum" id="5LMR"/>
<dbReference type="PDBsum" id="5LMS"/>
<dbReference type="PDBsum" id="5LMT"/>
<dbReference type="PDBsum" id="5LMU"/>
<dbReference type="PDBsum" id="5LMV"/>
<dbReference type="PDBsum" id="5NDJ"/>
<dbReference type="PDBsum" id="5NDK"/>
<dbReference type="PDBsum" id="5OT7"/>
<dbReference type="PDBsum" id="5UQ7"/>
<dbReference type="PDBsum" id="5UQ8"/>
<dbReference type="PDBsum" id="5VP2"/>
<dbReference type="PDBsum" id="5VPO"/>
<dbReference type="PDBsum" id="5VPP"/>
<dbReference type="PDBsum" id="5W4K"/>
<dbReference type="PDBsum" id="5WIS"/>
<dbReference type="PDBsum" id="5WIT"/>
<dbReference type="PDBsum" id="5WNP"/>
<dbReference type="PDBsum" id="5WNQ"/>
<dbReference type="PDBsum" id="5WNR"/>
<dbReference type="PDBsum" id="5WNS"/>
<dbReference type="PDBsum" id="5WNT"/>
<dbReference type="PDBsum" id="5WNU"/>
<dbReference type="PDBsum" id="5WNV"/>
<dbReference type="PDBsum" id="5ZLU"/>
<dbReference type="PDBsum" id="6BUW"/>
<dbReference type="PDBsum" id="6BZ6"/>
<dbReference type="PDBsum" id="6BZ7"/>
<dbReference type="PDBsum" id="6BZ8"/>
<dbReference type="PDBsum" id="6C5L"/>
<dbReference type="PDBsum" id="6CAE"/>
<dbReference type="PDBsum" id="6CAO"/>
<dbReference type="PDBsum" id="6CAP"/>
<dbReference type="PDBsum" id="6CAQ"/>
<dbReference type="PDBsum" id="6CAR"/>
<dbReference type="PDBsum" id="6CAS"/>
<dbReference type="PDBsum" id="6CFJ"/>
<dbReference type="PDBsum" id="6CFK"/>
<dbReference type="PDBsum" id="6CFL"/>
<dbReference type="PDBsum" id="6CZR"/>
<dbReference type="PDBsum" id="6DTI"/>
<dbReference type="PDBsum" id="6FKR"/>
<dbReference type="PDBsum" id="6GSJ"/>
<dbReference type="PDBsum" id="6GSK"/>
<dbReference type="PDBsum" id="6GSL"/>
<dbReference type="PDBsum" id="6GZQ"/>
<dbReference type="PDBsum" id="6GZX"/>
<dbReference type="PDBsum" id="6GZZ"/>
<dbReference type="PDBsum" id="6I69"/>
<dbReference type="PDBsum" id="6I6E"/>
<dbReference type="PDBsum" id="6I6I"/>
<dbReference type="PDBsum" id="6I6O"/>
<dbReference type="PDBsum" id="6I6S"/>
<dbReference type="PDBsum" id="6I6U"/>
<dbReference type="PDBsum" id="6I6W"/>
<dbReference type="PDBsum" id="6I6Y"/>
<dbReference type="PDBsum" id="6MKN"/>
<dbReference type="PDBsum" id="6MPF"/>
<dbReference type="PDBsum" id="6MPI"/>
<dbReference type="PDBsum" id="6N9E"/>
<dbReference type="PDBsum" id="6N9F"/>
<dbReference type="PDBsum" id="6ND5"/>
<dbReference type="PDBsum" id="6ND6"/>
<dbReference type="PDBsum" id="6NDK"/>
<dbReference type="PDBsum" id="6NSH"/>
<dbReference type="PDBsum" id="6NTA"/>
<dbReference type="PDBsum" id="6NUO"/>
<dbReference type="PDBsum" id="6NWY"/>
<dbReference type="PDBsum" id="6NY6"/>
<dbReference type="PDBsum" id="6O3M"/>
<dbReference type="PDBsum" id="6O97"/>
<dbReference type="PDBsum" id="6OF1"/>
<dbReference type="PDBsum" id="6OF6"/>
<dbReference type="PDBsum" id="6OJ2"/>
<dbReference type="PDBsum" id="6OPE"/>
<dbReference type="PDBsum" id="6ORD"/>
<dbReference type="PDBsum" id="6OSI"/>
<dbReference type="PDBsum" id="6OTR"/>
<dbReference type="PDBsum" id="6OXA"/>
<dbReference type="PDBsum" id="6OXI"/>
<dbReference type="PDBsum" id="6Q95"/>
<dbReference type="PDBsum" id="6QNQ"/>
<dbReference type="PDBsum" id="6QNR"/>
<dbReference type="PDBsum" id="6UCQ"/>
<dbReference type="PDBsum" id="6UO1"/>
<dbReference type="PDBsum" id="6XHV"/>
<dbReference type="PDBsum" id="6XHW"/>
<dbReference type="PDBsum" id="6XHX"/>
<dbReference type="PDBsum" id="6XHY"/>
<dbReference type="PDBsum" id="6XQD"/>
<dbReference type="PDBsum" id="6XQE"/>
<dbReference type="PDBsum" id="7AZO"/>
<dbReference type="PDBsum" id="7AZS"/>
<dbReference type="PDBsum" id="7B8V"/>
<dbReference type="PDBsum" id="7B90"/>
<dbReference type="PDBsum" id="7BFC"/>
<dbReference type="PDBsum" id="7BFD"/>
<dbReference type="PDBsum" id="7BFE"/>
<dbReference type="PDBsum" id="7BFF"/>
<dbReference type="PDBsum" id="7BFG"/>
<dbReference type="PDBsum" id="7DUG"/>
<dbReference type="PDBsum" id="7DUH"/>
<dbReference type="PDBsum" id="7DUI"/>
<dbReference type="PDBsum" id="7DUJ"/>
<dbReference type="PDBsum" id="7DUK"/>
<dbReference type="PDBsum" id="7DUL"/>
<dbReference type="PDBsum" id="7JQL"/>
<dbReference type="PDBsum" id="7JQM"/>
<dbReference type="PDBsum" id="7LH5"/>
<dbReference type="PDBsum" id="7MD7"/>
<dbReference type="PDBsum" id="7OS7"/>
<dbReference type="PDBsum" id="7RQ8"/>
<dbReference type="PDBsum" id="7RQ9"/>
<dbReference type="PDBsum" id="7RQA"/>
<dbReference type="PDBsum" id="7RQB"/>
<dbReference type="PDBsum" id="7RQC"/>
<dbReference type="PDBsum" id="7RQD"/>
<dbReference type="PDBsum" id="7RQE"/>
<dbReference type="PDBsum" id="7U2H"/>
<dbReference type="PDBsum" id="7U2I"/>
<dbReference type="PDBsum" id="7U2J"/>
<dbReference type="PDBsum" id="7V2L"/>
<dbReference type="PDBsum" id="7V2M"/>
<dbReference type="PDBsum" id="7V2N"/>
<dbReference type="PDBsum" id="7V2O"/>
<dbReference type="PDBsum" id="7V2P"/>
<dbReference type="PDBsum" id="7V2Q"/>
<dbReference type="PDBsum" id="8CVJ"/>
<dbReference type="PDBsum" id="8CVK"/>
<dbReference type="PDBsum" id="8CVL"/>
<dbReference type="PDBsum" id="8EKB"/>
<dbReference type="PDBsum" id="8EV6"/>
<dbReference type="PDBsum" id="8EV7"/>
<dbReference type="PDBsum" id="8FC1"/>
<dbReference type="PDBsum" id="8FC2"/>
<dbReference type="PDBsum" id="8FC3"/>
<dbReference type="PDBsum" id="8FC4"/>
<dbReference type="PDBsum" id="8FC5"/>
<dbReference type="PDBsum" id="8FC6"/>
<dbReference type="PDBsum" id="8FOM"/>
<dbReference type="PDBsum" id="8FON"/>
<dbReference type="PDBsum" id="8G29"/>
<dbReference type="PDBsum" id="8G2A"/>
<dbReference type="PDBsum" id="8G2B"/>
<dbReference type="PDBsum" id="8G2C"/>
<dbReference type="PDBsum" id="8G2D"/>
<dbReference type="PDBsum" id="8T8B"/>
<dbReference type="PDBsum" id="8T8C"/>
<dbReference type="PDBsum" id="8UD6"/>
<dbReference type="PDBsum" id="8UD7"/>
<dbReference type="PDBsum" id="8UD8"/>
<dbReference type="PDBsum" id="8UVR"/>
<dbReference type="PDBsum" id="8UVS"/>
<dbReference type="PDBsum" id="8VTU"/>
<dbReference type="PDBsum" id="8VTV"/>
<dbReference type="PDBsum" id="8VTW"/>
<dbReference type="PDBsum" id="8VTX"/>
<dbReference type="PDBsum" id="8VTY"/>
<dbReference type="PDBsum" id="9B00"/>
<dbReference type="PDBsum" id="9D0J"/>
<dbReference type="PDBsum" id="9D7R"/>
<dbReference type="PDBsum" id="9D7S"/>
<dbReference type="PDBsum" id="9D7T"/>
<dbReference type="PDBsum" id="9DFC"/>
<dbReference type="PDBsum" id="9DFD"/>
<dbReference type="PDBsum" id="9DFE"/>
<dbReference type="BMRB" id="Q5SLP8"/>
<dbReference type="EMDB" id="EMD-0101"/>
<dbReference type="EMDB" id="EMD-0104"/>
<dbReference type="EMDB" id="EMD-0105"/>
<dbReference type="EMDB" id="EMD-31655"/>
<dbReference type="EMDB" id="EMD-31656"/>
<dbReference type="EMDB" id="EMD-31657"/>
<dbReference type="EMDB" id="EMD-31658"/>
<dbReference type="EMDB" id="EMD-31659"/>
<dbReference type="EMDB" id="EMD-31660"/>
<dbReference type="EMDB" id="EMD-3852"/>
<dbReference type="EMDB" id="EMD-4073"/>
<dbReference type="EMDB" id="EMD-4074"/>
<dbReference type="EMDB" id="EMD-4075"/>
<dbReference type="EMDB" id="EMD-4076"/>
<dbReference type="EMDB" id="EMD-4077"/>
<dbReference type="EMDB" id="EMD-4078"/>
<dbReference type="EMDB" id="EMD-4079"/>
<dbReference type="EMDB" id="EMD-4080"/>
<dbReference type="EMDB" id="EMD-4083"/>
<dbReference type="EMDB" id="EMD-4475"/>
<dbReference type="EMDB" id="EMD-6934"/>
<dbReference type="EMDB" id="EMD-8596"/>
<dbReference type="EMDB" id="EMD-8597"/>
<dbReference type="SMR" id="Q5SLP8"/>
<dbReference type="IntAct" id="Q5SLP8">
    <property type="interactions" value="12"/>
</dbReference>
<dbReference type="DrugBank" id="DB08185">
    <property type="generic name" value="2-METHYLTHIO-N6-ISOPENTENYL-ADENOSINE-5'-MONOPHOSPHATE"/>
</dbReference>
<dbReference type="EnsemblBacteria" id="BAD70068">
    <property type="protein sequence ID" value="BAD70068"/>
    <property type="gene ID" value="BAD70068"/>
</dbReference>
<dbReference type="GeneID" id="3168355"/>
<dbReference type="KEGG" id="ttj:TTHA0245"/>
<dbReference type="PATRIC" id="fig|300852.9.peg.245"/>
<dbReference type="eggNOG" id="COG0360">
    <property type="taxonomic scope" value="Bacteria"/>
</dbReference>
<dbReference type="HOGENOM" id="CLU_113441_5_3_0"/>
<dbReference type="PhylomeDB" id="Q5SLP8"/>
<dbReference type="EvolutionaryTrace" id="Q5SLP8"/>
<dbReference type="Proteomes" id="UP000000532">
    <property type="component" value="Chromosome"/>
</dbReference>
<dbReference type="GO" id="GO:0005737">
    <property type="term" value="C:cytoplasm"/>
    <property type="evidence" value="ECO:0007669"/>
    <property type="project" value="UniProtKB-ARBA"/>
</dbReference>
<dbReference type="GO" id="GO:1990904">
    <property type="term" value="C:ribonucleoprotein complex"/>
    <property type="evidence" value="ECO:0007669"/>
    <property type="project" value="UniProtKB-KW"/>
</dbReference>
<dbReference type="GO" id="GO:0005840">
    <property type="term" value="C:ribosome"/>
    <property type="evidence" value="ECO:0007669"/>
    <property type="project" value="UniProtKB-KW"/>
</dbReference>
<dbReference type="GO" id="GO:0070181">
    <property type="term" value="F:small ribosomal subunit rRNA binding"/>
    <property type="evidence" value="ECO:0007669"/>
    <property type="project" value="TreeGrafter"/>
</dbReference>
<dbReference type="GO" id="GO:0003735">
    <property type="term" value="F:structural constituent of ribosome"/>
    <property type="evidence" value="ECO:0007669"/>
    <property type="project" value="InterPro"/>
</dbReference>
<dbReference type="GO" id="GO:0006412">
    <property type="term" value="P:translation"/>
    <property type="evidence" value="ECO:0007669"/>
    <property type="project" value="UniProtKB-UniRule"/>
</dbReference>
<dbReference type="CDD" id="cd00473">
    <property type="entry name" value="bS6"/>
    <property type="match status" value="1"/>
</dbReference>
<dbReference type="Gene3D" id="3.30.70.60">
    <property type="match status" value="2"/>
</dbReference>
<dbReference type="HAMAP" id="MF_00360">
    <property type="entry name" value="Ribosomal_bS6"/>
    <property type="match status" value="1"/>
</dbReference>
<dbReference type="InterPro" id="IPR000529">
    <property type="entry name" value="Ribosomal_bS6"/>
</dbReference>
<dbReference type="InterPro" id="IPR020815">
    <property type="entry name" value="Ribosomal_bS6_CS"/>
</dbReference>
<dbReference type="InterPro" id="IPR035980">
    <property type="entry name" value="Ribosomal_bS6_sf"/>
</dbReference>
<dbReference type="InterPro" id="IPR020814">
    <property type="entry name" value="Ribosomal_S6_plastid/chlpt"/>
</dbReference>
<dbReference type="InterPro" id="IPR014717">
    <property type="entry name" value="Transl_elong_EF1B/ribsomal_bS6"/>
</dbReference>
<dbReference type="NCBIfam" id="TIGR00166">
    <property type="entry name" value="S6"/>
    <property type="match status" value="1"/>
</dbReference>
<dbReference type="PANTHER" id="PTHR21011">
    <property type="entry name" value="MITOCHONDRIAL 28S RIBOSOMAL PROTEIN S6"/>
    <property type="match status" value="1"/>
</dbReference>
<dbReference type="PANTHER" id="PTHR21011:SF1">
    <property type="entry name" value="SMALL RIBOSOMAL SUBUNIT PROTEIN BS6M"/>
    <property type="match status" value="1"/>
</dbReference>
<dbReference type="Pfam" id="PF01250">
    <property type="entry name" value="Ribosomal_S6"/>
    <property type="match status" value="1"/>
</dbReference>
<dbReference type="SUPFAM" id="SSF54995">
    <property type="entry name" value="Ribosomal protein S6"/>
    <property type="match status" value="1"/>
</dbReference>
<dbReference type="PROSITE" id="PS01048">
    <property type="entry name" value="RIBOSOMAL_S6"/>
    <property type="match status" value="1"/>
</dbReference>
<sequence>MRRYEVNIVLNPNLDQSQLALEKEIIQRALENYGARVEKVEELGLRRLAYPIAKDPQGYFLWYQVEMPEDRVNDLARELRIRDNVRRVMVVKSQEPFLANA</sequence>
<name>RS6_THET8</name>
<gene>
    <name type="primary">rpsF</name>
    <name type="ordered locus">TTHA0245</name>
</gene>
<organism>
    <name type="scientific">Thermus thermophilus (strain ATCC 27634 / DSM 579 / HB8)</name>
    <dbReference type="NCBI Taxonomy" id="300852"/>
    <lineage>
        <taxon>Bacteria</taxon>
        <taxon>Thermotogati</taxon>
        <taxon>Deinococcota</taxon>
        <taxon>Deinococci</taxon>
        <taxon>Thermales</taxon>
        <taxon>Thermaceae</taxon>
        <taxon>Thermus</taxon>
    </lineage>
</organism>